<organism>
    <name type="scientific">Homo sapiens</name>
    <name type="common">Human</name>
    <dbReference type="NCBI Taxonomy" id="9606"/>
    <lineage>
        <taxon>Eukaryota</taxon>
        <taxon>Metazoa</taxon>
        <taxon>Chordata</taxon>
        <taxon>Craniata</taxon>
        <taxon>Vertebrata</taxon>
        <taxon>Euteleostomi</taxon>
        <taxon>Mammalia</taxon>
        <taxon>Eutheria</taxon>
        <taxon>Euarchontoglires</taxon>
        <taxon>Primates</taxon>
        <taxon>Haplorrhini</taxon>
        <taxon>Catarrhini</taxon>
        <taxon>Hominidae</taxon>
        <taxon>Homo</taxon>
    </lineage>
</organism>
<comment type="function">
    <text evidence="7 8 18 19 21 22 23 24 25">Tyrosine kinase of the non-receptor type involved in numerous cytokines and interferons signaling, which regulates cell growth, development, cell migration, innate and adaptive immunity (PubMed:10542297, PubMed:10995743, PubMed:7657660, PubMed:7813427, PubMed:8232552). Plays both structural and catalytic roles in numerous interleukins and interferons (IFN-alpha/beta) signaling (PubMed:10542297). Associates with heterodimeric cytokine receptor complexes and activates STAT family members including STAT1, STAT3, STAT4 or STAT6 (PubMed:10542297, PubMed:7638186). The heterodimeric cytokine receptor complexes are composed of (1) a TYK2-associated receptor chain (IFNAR1, IL12RB1, IL10RB or IL13RA1), and (2) a second receptor chain associated either with JAK1 or JAK2 (PubMed:10542297, PubMed:25762719, PubMed:7526154, PubMed:7813427). In response to cytokine-binding to receptors, phosphorylates and activates receptors (IFNAR1, IL12RB1, IL10RB or IL13RA1), creating docking sites for STAT members (PubMed:7526154, PubMed:7657660). In turn, recruited STATs are phosphorylated by TYK2 (or JAK1/JAK2 on the second receptor chain), form homo- and heterodimers, translocate to the nucleus, and regulate cytokine/growth factor responsive genes (PubMed:10542297, PubMed:25762719, PubMed:7657660). Negatively regulates STAT3 activity by promototing phosphorylation at a specific tyrosine that differs from the site used for signaling (PubMed:29162862).</text>
</comment>
<comment type="catalytic activity">
    <reaction evidence="7 21">
        <text>L-tyrosyl-[protein] + ATP = O-phospho-L-tyrosyl-[protein] + ADP + H(+)</text>
        <dbReference type="Rhea" id="RHEA:10596"/>
        <dbReference type="Rhea" id="RHEA-COMP:10136"/>
        <dbReference type="Rhea" id="RHEA-COMP:20101"/>
        <dbReference type="ChEBI" id="CHEBI:15378"/>
        <dbReference type="ChEBI" id="CHEBI:30616"/>
        <dbReference type="ChEBI" id="CHEBI:46858"/>
        <dbReference type="ChEBI" id="CHEBI:61978"/>
        <dbReference type="ChEBI" id="CHEBI:456216"/>
        <dbReference type="EC" id="2.7.10.2"/>
    </reaction>
</comment>
<comment type="activity regulation">
    <text evidence="17 18">The protein kinase 1 domain (also termed pseudokinase domain) mediates autoinhibition of the TYK2 kinase domain.</text>
</comment>
<comment type="subunit">
    <text evidence="8 9 10 14">Interacts (via FERM domain) with JAKMIP1 (PubMed:15277531, PubMed:20478313). Interacts with PIK3R1; this interaction is important for cell migration (PubMed:10995743). Interacts with MPL/TPOR (PubMed:15899890).</text>
</comment>
<comment type="subunit">
    <text evidence="11">(Microbial infection) Interacts with Epstein-Barr virus protein LMP1; this interaction inhibits TYK2-mediated interferon signaling.</text>
</comment>
<comment type="subunit">
    <text evidence="6">(Microbial infection) Interacts with papillomavirus-18 protein E6; this interaction impairs JAK-STAT activation by interferon-alpha.</text>
</comment>
<comment type="subunit">
    <text evidence="20">(Microbial infection) Interacts with Epstein-Barr virus (EBV) tegument protein BGLF2; this interaction participates in the inhibition of type I IFN signaling by the virus.</text>
</comment>
<comment type="interaction">
    <interactant intactId="EBI-1383454">
        <id>P29597</id>
    </interactant>
    <interactant intactId="EBI-712648">
        <id>O95994</id>
        <label>AGR2</label>
    </interactant>
    <organismsDiffer>false</organismsDiffer>
    <experiments>5</experiments>
</comment>
<comment type="interaction">
    <interactant intactId="EBI-1383454">
        <id>P29597</id>
    </interactant>
    <interactant intactId="EBI-357530">
        <id>Q9ULX6</id>
        <label>AKAP8L</label>
    </interactant>
    <organismsDiffer>false</organismsDiffer>
    <experiments>3</experiments>
</comment>
<comment type="interaction">
    <interactant intactId="EBI-1383454">
        <id>P29597</id>
    </interactant>
    <interactant intactId="EBI-3867333">
        <id>A8MQ03</id>
        <label>CYSRT1</label>
    </interactant>
    <organismsDiffer>false</organismsDiffer>
    <experiments>3</experiments>
</comment>
<comment type="interaction">
    <interactant intactId="EBI-1383454">
        <id>P29597</id>
    </interactant>
    <interactant intactId="EBI-741101">
        <id>Q13643</id>
        <label>FHL3</label>
    </interactant>
    <organismsDiffer>false</organismsDiffer>
    <experiments>6</experiments>
</comment>
<comment type="interaction">
    <interactant intactId="EBI-1383454">
        <id>P29597</id>
    </interactant>
    <interactant intactId="EBI-5916454">
        <id>A6NEM1</id>
        <label>GOLGA6L9</label>
    </interactant>
    <organismsDiffer>false</organismsDiffer>
    <experiments>3</experiments>
</comment>
<comment type="interaction">
    <interactant intactId="EBI-1383454">
        <id>P29597</id>
    </interactant>
    <interactant intactId="EBI-304185">
        <id>P61978</id>
        <label>HNRNPK</label>
    </interactant>
    <organismsDiffer>false</organismsDiffer>
    <experiments>4</experiments>
</comment>
<comment type="interaction">
    <interactant intactId="EBI-1383454">
        <id>P29597</id>
    </interactant>
    <interactant intactId="EBI-7060731">
        <id>P61978-2</id>
        <label>HNRNPK</label>
    </interactant>
    <organismsDiffer>false</organismsDiffer>
    <experiments>3</experiments>
</comment>
<comment type="interaction">
    <interactant intactId="EBI-1383454">
        <id>P29597</id>
    </interactant>
    <interactant intactId="EBI-352572">
        <id>P08238</id>
        <label>HSP90AB1</label>
    </interactant>
    <organismsDiffer>false</organismsDiffer>
    <experiments>2</experiments>
</comment>
<comment type="interaction">
    <interactant intactId="EBI-1383454">
        <id>P29597</id>
    </interactant>
    <interactant intactId="EBI-16099379">
        <id>P17181-1</id>
        <label>IFNAR1</label>
    </interactant>
    <organismsDiffer>false</organismsDiffer>
    <experiments>3</experiments>
</comment>
<comment type="interaction">
    <interactant intactId="EBI-1383454">
        <id>P29597</id>
    </interactant>
    <interactant intactId="EBI-518647">
        <id>O60674</id>
        <label>JAK2</label>
    </interactant>
    <organismsDiffer>false</organismsDiffer>
    <experiments>2</experiments>
</comment>
<comment type="interaction">
    <interactant intactId="EBI-1383454">
        <id>P29597</id>
    </interactant>
    <interactant intactId="EBI-742808">
        <id>Q5VWX1</id>
        <label>KHDRBS2</label>
    </interactant>
    <organismsDiffer>false</organismsDiffer>
    <experiments>7</experiments>
</comment>
<comment type="interaction">
    <interactant intactId="EBI-1383454">
        <id>P29597</id>
    </interactant>
    <interactant intactId="EBI-722504">
        <id>O75525</id>
        <label>KHDRBS3</label>
    </interactant>
    <organismsDiffer>false</organismsDiffer>
    <experiments>3</experiments>
</comment>
<comment type="interaction">
    <interactant intactId="EBI-1383454">
        <id>P29597</id>
    </interactant>
    <interactant intactId="EBI-948001">
        <id>Q15323</id>
        <label>KRT31</label>
    </interactant>
    <organismsDiffer>false</organismsDiffer>
    <experiments>3</experiments>
</comment>
<comment type="interaction">
    <interactant intactId="EBI-1383454">
        <id>P29597</id>
    </interactant>
    <interactant intactId="EBI-10171697">
        <id>Q6A162</id>
        <label>KRT40</label>
    </interactant>
    <organismsDiffer>false</organismsDiffer>
    <experiments>3</experiments>
</comment>
<comment type="interaction">
    <interactant intactId="EBI-1383454">
        <id>P29597</id>
    </interactant>
    <interactant intactId="EBI-22311199">
        <id>Q3LI67</id>
        <label>KRTAP6-3</label>
    </interactant>
    <organismsDiffer>false</organismsDiffer>
    <experiments>3</experiments>
</comment>
<comment type="interaction">
    <interactant intactId="EBI-1383454">
        <id>P29597</id>
    </interactant>
    <interactant intactId="EBI-12859340">
        <id>Q9NQX1-2</id>
        <label>PRDM5</label>
    </interactant>
    <organismsDiffer>false</organismsDiffer>
    <experiments>3</experiments>
</comment>
<comment type="interaction">
    <interactant intactId="EBI-1383454">
        <id>P29597</id>
    </interactant>
    <interactant intactId="EBI-1546963">
        <id>P52630</id>
        <label>STAT2</label>
    </interactant>
    <organismsDiffer>false</organismsDiffer>
    <experiments>4</experiments>
</comment>
<comment type="interaction">
    <interactant intactId="EBI-1383454">
        <id>P29597</id>
    </interactant>
    <interactant intactId="EBI-11952721">
        <id>Q05BL1</id>
        <label>TP53BP2</label>
    </interactant>
    <organismsDiffer>false</organismsDiffer>
    <experiments>3</experiments>
</comment>
<comment type="interaction">
    <interactant intactId="EBI-1383454">
        <id>P29597</id>
    </interactant>
    <interactant intactId="EBI-3650647">
        <id>Q9BUZ4</id>
        <label>TRAF4</label>
    </interactant>
    <organismsDiffer>false</organismsDiffer>
    <experiments>3</experiments>
</comment>
<comment type="tissue specificity">
    <text evidence="15">Observed in all cell lines analyzed. Expressed in a variety of lymphoid and non-lymphoid cell lines.</text>
</comment>
<comment type="PTM">
    <text evidence="22 26 29">Phosphorylated (PubMed:7638186). Phosphorylation by JAK1 at Tyr-1054 and Tyr-1055 induces kinase activation (PubMed:8232552, PubMed:8702790).</text>
</comment>
<comment type="disease" evidence="12">
    <disease id="DI-02224">
        <name>Immunodeficiency 35</name>
        <acronym>IMD35</acronym>
        <description>A primary immunodeficiency characterized by recurrent skin abscesses, pneumonia, and highly elevated serum IgE.</description>
        <dbReference type="MIM" id="611521"/>
    </disease>
    <text>The disease is caused by variants affecting the gene represented in this entry.</text>
</comment>
<comment type="similarity">
    <text evidence="3">Belongs to the protein kinase superfamily. Tyr protein kinase family. JAK subfamily.</text>
</comment>
<comment type="online information" name="TYK2">
    <link uri="https://databases.lovd.nl/shared/genes/TYK2"/>
    <text>tyrosine kinase 2</text>
</comment>
<keyword id="KW-0002">3D-structure</keyword>
<keyword id="KW-0067">ATP-binding</keyword>
<keyword id="KW-0418">Kinase</keyword>
<keyword id="KW-0547">Nucleotide-binding</keyword>
<keyword id="KW-0597">Phosphoprotein</keyword>
<keyword id="KW-1267">Proteomics identification</keyword>
<keyword id="KW-1185">Reference proteome</keyword>
<keyword id="KW-0677">Repeat</keyword>
<keyword id="KW-0727">SH2 domain</keyword>
<keyword id="KW-0808">Transferase</keyword>
<keyword id="KW-0829">Tyrosine-protein kinase</keyword>
<reference key="1">
    <citation type="journal article" date="1990" name="Oncogene">
        <title>TYK2, prototype of a novel class of non-receptor tyrosine kinase genes.</title>
        <authorList>
            <person name="Firmbach-Kraft I."/>
            <person name="Byers M."/>
            <person name="Shows T."/>
            <person name="Dalla-Favera R."/>
            <person name="Krolewski J.J."/>
        </authorList>
    </citation>
    <scope>NUCLEOTIDE SEQUENCE [MRNA]</scope>
    <scope>VARIANTS PHE-362 AND SER-684</scope>
</reference>
<reference key="2">
    <citation type="submission" date="2004-02" db="EMBL/GenBank/DDBJ databases">
        <authorList>
            <consortium name="SeattleSNPs variation discovery resource"/>
        </authorList>
    </citation>
    <scope>NUCLEOTIDE SEQUENCE [GENOMIC DNA]</scope>
    <scope>VARIANTS HIS-4; HIS-197; PHE-362; SER-363 AND SER-684</scope>
</reference>
<reference key="3">
    <citation type="journal article" date="2004" name="Genome Res.">
        <title>The status, quality, and expansion of the NIH full-length cDNA project: the Mammalian Gene Collection (MGC).</title>
        <authorList>
            <consortium name="The MGC Project Team"/>
        </authorList>
    </citation>
    <scope>NUCLEOTIDE SEQUENCE [LARGE SCALE MRNA]</scope>
    <source>
        <tissue>Kidney</tissue>
    </source>
</reference>
<reference key="4">
    <citation type="journal article" date="1992" name="Cell">
        <title>A protein tyrosine kinase in the interferon alpha/beta signaling pathway.</title>
        <authorList>
            <person name="Velazquez L."/>
            <person name="Fellous M."/>
            <person name="Stark G.R."/>
            <person name="Pellegrini S."/>
        </authorList>
    </citation>
    <scope>NUCLEOTIDE SEQUENCE [MRNA] OF 289-1187</scope>
</reference>
<reference key="5">
    <citation type="journal article" date="1990" name="Oncogene">
        <title>Identification and chromosomal mapping of new human tyrosine kinase genes.</title>
        <authorList>
            <person name="Krolewski J.J."/>
            <person name="Lee R."/>
            <person name="Eddy R."/>
            <person name="Shows T.B."/>
            <person name="Dalla-Favera R."/>
        </authorList>
    </citation>
    <scope>NUCLEOTIDE SEQUENCE [MRNA] OF 1007-1162</scope>
    <scope>TISSUE SPECIFICITY</scope>
</reference>
<reference key="6">
    <citation type="journal article" date="1990" name="Proc. Natl. Acad. Sci. U.S.A.">
        <title>Putative tyrosine kinases expressed in K-562 human leukemia cells.</title>
        <authorList>
            <person name="Partanen J."/>
            <person name="Maekelae T.P."/>
            <person name="Alitalo R."/>
            <person name="Lehvaeslaiho H."/>
            <person name="Alitalo K."/>
        </authorList>
    </citation>
    <scope>NUCLEOTIDE SEQUENCE [MRNA] OF 1025-1082</scope>
</reference>
<reference key="7">
    <citation type="journal article" date="1993" name="Nature">
        <title>The protein tyrosine kinase JAK1 complements defects in interferon-alpha/beta and -gamma signal transduction.</title>
        <authorList>
            <person name="Mueller M."/>
            <person name="Briscoe J."/>
            <person name="Laxton C."/>
            <person name="Guschin D."/>
            <person name="Ziemiecki A."/>
            <person name="Silvennoinen O."/>
            <person name="Harpur A.G."/>
            <person name="Barbieri G."/>
            <person name="Witthuhn B.A."/>
            <person name="Schindler C."/>
        </authorList>
    </citation>
    <scope>FUNCTION</scope>
    <scope>PHOSPHORYLATION</scope>
</reference>
<reference key="8">
    <citation type="journal article" date="1994" name="EMBO J.">
        <title>Differential tyrosine phosphorylation of the IFNAR chain of the type I interferon receptor and of an associated surface protein in response to IFN-alpha and IFN-beta.</title>
        <authorList>
            <person name="Abramovich C."/>
            <person name="Shulman L.M."/>
            <person name="Ratovitski E."/>
            <person name="Harroch S."/>
            <person name="Tovey M."/>
            <person name="Eid P."/>
            <person name="Revel M."/>
        </authorList>
    </citation>
    <scope>FUNCTION</scope>
</reference>
<reference key="9">
    <citation type="journal article" date="1994" name="Mol. Cell. Biol.">
        <title>Direct binding to and tyrosine phosphorylation of the alpha subunit of the type I interferon receptor by p135tyk2 tyrosine kinase.</title>
        <authorList>
            <person name="Colamonici O."/>
            <person name="Yan H."/>
            <person name="Domanski P."/>
            <person name="Handa R."/>
            <person name="Smalley D."/>
            <person name="Mullersman J."/>
            <person name="Witte M."/>
            <person name="Krishnan K."/>
            <person name="Krolewski J."/>
        </authorList>
    </citation>
    <scope>FUNCTION</scope>
    <scope>CATALYTIC ACTIVITY</scope>
</reference>
<reference key="10">
    <citation type="journal article" date="1995" name="J. Biol. Chem.">
        <title>Phosphorylation and activation of the DNA binding activity of purified Stat1 by the Janus protein-tyrosine kinases and the epidermal growth factor receptor.</title>
        <authorList>
            <person name="Quelle F.W."/>
            <person name="Thierfelder W."/>
            <person name="Witthuhn B.A."/>
            <person name="Tang B."/>
            <person name="Cohen S."/>
            <person name="Ihle J.N."/>
        </authorList>
    </citation>
    <scope>FUNCTION</scope>
</reference>
<reference key="11">
    <citation type="journal article" date="1995" name="Proc. Natl. Acad. Sci. U.S.A.">
        <title>Interleukin 12 induces tyrosine phosphorylation and activation of STAT4 in human lymphocytes.</title>
        <authorList>
            <person name="Bacon C.M."/>
            <person name="Petricoin E.F. III"/>
            <person name="Ortaldo J.R."/>
            <person name="Rees R.C."/>
            <person name="Larner A.C."/>
            <person name="Johnston J.A."/>
            <person name="O'Shea J.J."/>
        </authorList>
    </citation>
    <scope>FUNCTION</scope>
    <scope>PHOSPHORYLATION</scope>
</reference>
<reference key="12">
    <citation type="journal article" date="1996" name="J. Biol. Chem.">
        <title>Interferon-alpha-dependent activation of Tyk2 requires phosphorylation of positive regulatory tyrosines by another kinase.</title>
        <authorList>
            <person name="Gauzzi M.C."/>
            <person name="Velazquez L."/>
            <person name="McKendry R."/>
            <person name="Mogensen K.E."/>
            <person name="Fellous M."/>
            <person name="Pellegrini S."/>
        </authorList>
    </citation>
    <scope>FUNCTION</scope>
    <scope>MUTAGENESIS OF LYS-930; TYR-1054; TYR-1055; TYR-1145 AND TYR-1176</scope>
    <scope>PHOSPHORYLATION AT TYR-1054 AND TYR-1055</scope>
</reference>
<reference key="13">
    <citation type="journal article" date="1999" name="J. Biol. Chem.">
        <title>Catalytically active TYK2 is essential for interferon-beta-mediated phosphorylation of STAT3 and interferon-alpha receptor-1 (IFNAR-1) but not for activation of phosphoinositol 3-kinase.</title>
        <authorList>
            <person name="Rani M.R."/>
            <person name="Leaman D.W."/>
            <person name="Han Y."/>
            <person name="Leung S."/>
            <person name="Croze E."/>
            <person name="Fish E.N."/>
            <person name="Wolfman A."/>
            <person name="Ransohoff R.M."/>
        </authorList>
    </citation>
    <scope>FUNCTION</scope>
    <scope>CATALYTIC ACTIVITY</scope>
</reference>
<reference key="14">
    <citation type="journal article" date="1999" name="Oncogene">
        <title>The human papilloma virus (HPV)-18 E6 oncoprotein physically associates with Tyk2 and impairs Jak-STAT activation by interferon-alpha.</title>
        <authorList>
            <person name="Li S."/>
            <person name="Labrecque S."/>
            <person name="Gauzzi M.C."/>
            <person name="Cuddihy A.R."/>
            <person name="Wong A.H."/>
            <person name="Pellegrini S."/>
            <person name="Matlashewski G.J."/>
            <person name="Koromilas A.E."/>
        </authorList>
    </citation>
    <scope>INTERACTION WITH PAPILLOMAVIRUS VIRUS PROTEIN E6 (MICROBIAL INFECTION)</scope>
</reference>
<reference key="15">
    <citation type="journal article" date="2000" name="J. Biol. Chem.">
        <title>Urokinase stimulates human vascular smooth muscle cell migration via a phosphatidylinositol 3-kinase-Tyk2 interaction.</title>
        <authorList>
            <person name="Kusch A."/>
            <person name="Tkachuk S."/>
            <person name="Haller H."/>
            <person name="Dietz R."/>
            <person name="Gulba D.C."/>
            <person name="Lipp M."/>
            <person name="Dumler I."/>
        </authorList>
    </citation>
    <scope>FUNCTION IN CELL MIGRATION</scope>
    <scope>INTERACTION WITH PIK3R1</scope>
</reference>
<reference key="16">
    <citation type="journal article" date="2004" name="J. Biol. Chem.">
        <title>Jamip1 (marlin-1) defines a family of proteins interacting with Janus kinases and microtubules.</title>
        <authorList>
            <person name="Steindler C."/>
            <person name="Li Z."/>
            <person name="Algarte M."/>
            <person name="Alcover A."/>
            <person name="Libri V."/>
            <person name="Ragimbeau J."/>
            <person name="Pellegrini S."/>
        </authorList>
    </citation>
    <scope>INTERACTION WITH JAKMIP1</scope>
</reference>
<reference key="17">
    <citation type="journal article" date="2005" name="J. Biol. Chem.">
        <title>Janus kinases affect thrombopoietin receptor cell surface localization and stability.</title>
        <authorList>
            <person name="Royer Y."/>
            <person name="Staerk J."/>
            <person name="Costuleanu M."/>
            <person name="Courtoy P.J."/>
            <person name="Constantinescu S.N."/>
        </authorList>
    </citation>
    <scope>INTERACTION WITH TPOR</scope>
</reference>
<reference key="18">
    <citation type="journal article" date="2006" name="Immunity">
        <title>Human tyrosine kinase 2 deficiency reveals its requisite roles in multiple cytokine signals involved in innate and acquired immunity.</title>
        <authorList>
            <person name="Minegishi Y."/>
            <person name="Saito M."/>
            <person name="Morio T."/>
            <person name="Watanabe K."/>
            <person name="Agematsu K."/>
            <person name="Tsuchiya S."/>
            <person name="Takada H."/>
            <person name="Hara T."/>
            <person name="Kawamura N."/>
            <person name="Ariga T."/>
            <person name="Kaneko H."/>
            <person name="Kondo N."/>
            <person name="Tsuge I."/>
            <person name="Yachie A."/>
            <person name="Sakiyama Y."/>
            <person name="Iwata T."/>
            <person name="Bessho F."/>
            <person name="Ohishi T."/>
            <person name="Joh K."/>
            <person name="Imai K."/>
            <person name="Kogawa K."/>
            <person name="Shinohara M."/>
            <person name="Fujieda M."/>
            <person name="Wakiguchi H."/>
            <person name="Pasic S."/>
            <person name="Abinun M."/>
            <person name="Ochs H.D."/>
            <person name="Renner E.D."/>
            <person name="Jansson A."/>
            <person name="Belohradsky B.H."/>
            <person name="Metin A."/>
            <person name="Shimizu N."/>
            <person name="Mizutani S."/>
            <person name="Miyawaki T."/>
            <person name="Nonoyama S."/>
            <person name="Karasuyama H."/>
        </authorList>
    </citation>
    <scope>INVOLVEMENT IN IMD35</scope>
</reference>
<reference key="19">
    <citation type="journal article" date="2006" name="J. Virol.">
        <title>The Epstein-Barr virus-encoded LMP-1 oncoprotein negatively affects Tyk2 phosphorylation and interferon signaling in human B cells.</title>
        <authorList>
            <person name="Geiger T.R."/>
            <person name="Martin J.M."/>
        </authorList>
    </citation>
    <scope>INTERACTION WITH EPSTEIN-BARR VIRUS PROTEIN LMP1 (MICROBIAL INFECTION)</scope>
</reference>
<reference key="20">
    <citation type="journal article" date="2008" name="Mol. Cell">
        <title>Kinase-selective enrichment enables quantitative phosphoproteomics of the kinome across the cell cycle.</title>
        <authorList>
            <person name="Daub H."/>
            <person name="Olsen J.V."/>
            <person name="Bairlein M."/>
            <person name="Gnad F."/>
            <person name="Oppermann F.S."/>
            <person name="Korner R."/>
            <person name="Greff Z."/>
            <person name="Keri G."/>
            <person name="Stemmann O."/>
            <person name="Mann M."/>
        </authorList>
    </citation>
    <scope>PHOSPHORYLATION [LARGE SCALE ANALYSIS] AT TYR-292 AND SER-884</scope>
    <scope>IDENTIFICATION BY MASS SPECTROMETRY [LARGE SCALE ANALYSIS]</scope>
    <source>
        <tissue>Cervix carcinoma</tissue>
    </source>
</reference>
<reference key="21">
    <citation type="journal article" date="2009" name="Mol. Cell. Proteomics">
        <title>Large-scale proteomics analysis of the human kinome.</title>
        <authorList>
            <person name="Oppermann F.S."/>
            <person name="Gnad F."/>
            <person name="Olsen J.V."/>
            <person name="Hornberger R."/>
            <person name="Greff Z."/>
            <person name="Keri G."/>
            <person name="Mann M."/>
            <person name="Daub H."/>
        </authorList>
    </citation>
    <scope>PHOSPHORYLATION [LARGE SCALE ANALYSIS] AT TYR-292 AND SER-884</scope>
    <scope>IDENTIFICATION BY MASS SPECTROMETRY [LARGE SCALE ANALYSIS]</scope>
</reference>
<reference key="22">
    <citation type="journal article" date="2013" name="J. Proteome Res.">
        <title>Toward a comprehensive characterization of a human cancer cell phosphoproteome.</title>
        <authorList>
            <person name="Zhou H."/>
            <person name="Di Palma S."/>
            <person name="Preisinger C."/>
            <person name="Peng M."/>
            <person name="Polat A.N."/>
            <person name="Heck A.J."/>
            <person name="Mohammed S."/>
        </authorList>
    </citation>
    <scope>PHOSPHORYLATION [LARGE SCALE ANALYSIS] AT TYR-292 AND SER-499</scope>
    <scope>IDENTIFICATION BY MASS SPECTROMETRY [LARGE SCALE ANALYSIS]</scope>
    <source>
        <tissue>Cervix carcinoma</tissue>
    </source>
</reference>
<reference key="23">
    <citation type="journal article" date="2017" name="Sci. Rep.">
        <title>TYK2-induced phosphorylation of Y640 suppresses STAT3 transcriptional activity.</title>
        <authorList>
            <person name="Mori R."/>
            <person name="Wauman J."/>
            <person name="Icardi L."/>
            <person name="Van der Heyden J."/>
            <person name="De Cauwer L."/>
            <person name="Peelman F."/>
            <person name="De Bosscher K."/>
            <person name="Tavernier J."/>
        </authorList>
    </citation>
    <scope>FUNCTION</scope>
</reference>
<reference key="24">
    <citation type="journal article" date="2020" name="J. Virol.">
        <title>Epstein-Barr Virus (EBV) Tegument Protein BGLF2 Suppresses Type I Interferon Signaling To Promote EBV Reactivation.</title>
        <authorList>
            <person name="Liu X."/>
            <person name="Sadaoka T."/>
            <person name="Krogmann T."/>
            <person name="Cohen J.I."/>
        </authorList>
    </citation>
    <scope>INTERACTION WITH EPSTEIN-BARR VIRUS TEGUMENT PROTEIN BGLF2 (MICROBIAL INFECTION)</scope>
</reference>
<reference key="25">
    <citation type="journal article" date="2010" name="J. Mol. Biol.">
        <title>Structural and thermodynamic characterization of the TYK2 and JAK3 kinase domains in complex with CP-690550 and CMP-6.</title>
        <authorList>
            <person name="Chrencik J.E."/>
            <person name="Patny A."/>
            <person name="Leung I.K."/>
            <person name="Korniski B."/>
            <person name="Emmons T.L."/>
            <person name="Hall T."/>
            <person name="Weinberg R.A."/>
            <person name="Gormley J.A."/>
            <person name="Williams J.M."/>
            <person name="Day J.E."/>
            <person name="Hirsch J.L."/>
            <person name="Kiefer J.R."/>
            <person name="Leone J.W."/>
            <person name="Fischer H.D."/>
            <person name="Sommers C.D."/>
            <person name="Huang H.C."/>
            <person name="Jacobsen E.J."/>
            <person name="Tenbrink R.E."/>
            <person name="Tomasselli A.G."/>
            <person name="Benson T.E."/>
        </authorList>
    </citation>
    <scope>X-RAY CRYSTALLOGRAPHY (1.65 ANGSTROMS) OF 888-1182 IN COMPLEX WITH INHIBITOR</scope>
    <scope>PHOSPHORYLATION AT TYR-1054</scope>
</reference>
<reference evidence="31" key="26">
    <citation type="journal article" date="2015" name="J. Biol. Chem.">
        <title>Tyrosine Kinase 2-mediated Signal Transduction in T Lymphocytes Is Blocked by Pharmacological Stabilization of Its Pseudokinase Domain.</title>
        <authorList>
            <person name="Tokarski J.S."/>
            <person name="Zupa-Fernandez A."/>
            <person name="Tredup J.A."/>
            <person name="Pike K."/>
            <person name="Chang C."/>
            <person name="Xie D."/>
            <person name="Cheng L."/>
            <person name="Pedicord D."/>
            <person name="Muckelbauer J."/>
            <person name="Johnson S.R."/>
            <person name="Wu S."/>
            <person name="Edavettal S.C."/>
            <person name="Hong Y."/>
            <person name="Witmer M.R."/>
            <person name="Elkin L.L."/>
            <person name="Blat Y."/>
            <person name="Pitts W.J."/>
            <person name="Weinstein D.S."/>
            <person name="Burke J.R."/>
        </authorList>
    </citation>
    <scope>X-RAY CRYSTALLOGRAPHY (1.80 ANGSTROMS) OF 575-869</scope>
    <scope>FUNCTION</scope>
    <scope>ACTIVITY REGULATION</scope>
</reference>
<reference evidence="30" key="27">
    <citation type="journal article" date="2014" name="Proc. Natl. Acad. Sci. U.S.A.">
        <title>Structure of the pseudokinase-kinase domains from protein kinase TYK2 reveals a mechanism for Janus kinase (JAK) autoinhibition.</title>
        <authorList>
            <person name="Lupardus P.J."/>
            <person name="Ultsch M."/>
            <person name="Wallweber H."/>
            <person name="Bir Kohli P."/>
            <person name="Johnson A.R."/>
            <person name="Eigenbrot C."/>
        </authorList>
    </citation>
    <scope>X-RAY CRYSTALLOGRAPHY (2.80 ANGSTROMS) OF 566-1187</scope>
    <scope>PHOSPHORYLATION</scope>
    <scope>ACTIVITY REGULATION</scope>
    <scope>MUTAGENESIS OF ASP-1023</scope>
</reference>
<reference key="28">
    <citation type="journal article" date="2007" name="Nature">
        <title>Patterns of somatic mutation in human cancer genomes.</title>
        <authorList>
            <person name="Greenman C."/>
            <person name="Stephens P."/>
            <person name="Smith R."/>
            <person name="Dalgliesh G.L."/>
            <person name="Hunter C."/>
            <person name="Bignell G."/>
            <person name="Davies H."/>
            <person name="Teague J."/>
            <person name="Butler A."/>
            <person name="Stevens C."/>
            <person name="Edkins S."/>
            <person name="O'Meara S."/>
            <person name="Vastrik I."/>
            <person name="Schmidt E.E."/>
            <person name="Avis T."/>
            <person name="Barthorpe S."/>
            <person name="Bhamra G."/>
            <person name="Buck G."/>
            <person name="Choudhury B."/>
            <person name="Clements J."/>
            <person name="Cole J."/>
            <person name="Dicks E."/>
            <person name="Forbes S."/>
            <person name="Gray K."/>
            <person name="Halliday K."/>
            <person name="Harrison R."/>
            <person name="Hills K."/>
            <person name="Hinton J."/>
            <person name="Jenkinson A."/>
            <person name="Jones D."/>
            <person name="Menzies A."/>
            <person name="Mironenko T."/>
            <person name="Perry J."/>
            <person name="Raine K."/>
            <person name="Richardson D."/>
            <person name="Shepherd R."/>
            <person name="Small A."/>
            <person name="Tofts C."/>
            <person name="Varian J."/>
            <person name="Webb T."/>
            <person name="West S."/>
            <person name="Widaa S."/>
            <person name="Yates A."/>
            <person name="Cahill D.P."/>
            <person name="Louis D.N."/>
            <person name="Goldstraw P."/>
            <person name="Nicholson A.G."/>
            <person name="Brasseur F."/>
            <person name="Looijenga L."/>
            <person name="Weber B.L."/>
            <person name="Chiew Y.-E."/>
            <person name="DeFazio A."/>
            <person name="Greaves M.F."/>
            <person name="Green A.R."/>
            <person name="Campbell P."/>
            <person name="Birney E."/>
            <person name="Easton D.F."/>
            <person name="Chenevix-Trench G."/>
            <person name="Tan M.-H."/>
            <person name="Khoo S.K."/>
            <person name="Teh B.T."/>
            <person name="Yuen S.T."/>
            <person name="Leung S.Y."/>
            <person name="Wooster R."/>
            <person name="Futreal P.A."/>
            <person name="Stratton M.R."/>
        </authorList>
    </citation>
    <scope>VARIANTS [LARGE SCALE ANALYSIS] PHE-362; SER-363; MET-386; SER-684; TRP-703; ARG-732; VAL-928; ALA-1104 AND GLY-1163</scope>
</reference>
<feature type="chain" id="PRO_0000088177" description="Non-receptor tyrosine-protein kinase TYK2">
    <location>
        <begin position="1"/>
        <end position="1187"/>
    </location>
</feature>
<feature type="domain" description="FERM" evidence="2">
    <location>
        <begin position="26"/>
        <end position="431"/>
    </location>
</feature>
<feature type="domain" description="SH2; atypical">
    <location>
        <begin position="450"/>
        <end position="529"/>
    </location>
</feature>
<feature type="domain" description="Protein kinase 1" evidence="3">
    <location>
        <begin position="589"/>
        <end position="875"/>
    </location>
</feature>
<feature type="domain" description="Protein kinase 2" evidence="3">
    <location>
        <begin position="897"/>
        <end position="1176"/>
    </location>
</feature>
<feature type="region of interest" description="Disordered" evidence="5">
    <location>
        <begin position="335"/>
        <end position="366"/>
    </location>
</feature>
<feature type="region of interest" description="Disordered" evidence="5">
    <location>
        <begin position="610"/>
        <end position="629"/>
    </location>
</feature>
<feature type="compositionally biased region" description="Polar residues" evidence="5">
    <location>
        <begin position="339"/>
        <end position="349"/>
    </location>
</feature>
<feature type="compositionally biased region" description="Acidic residues" evidence="5">
    <location>
        <begin position="614"/>
        <end position="626"/>
    </location>
</feature>
<feature type="active site" description="Proton acceptor" evidence="3 4">
    <location>
        <position position="1023"/>
    </location>
</feature>
<feature type="binding site" evidence="3">
    <location>
        <begin position="903"/>
        <end position="911"/>
    </location>
    <ligand>
        <name>ATP</name>
        <dbReference type="ChEBI" id="CHEBI:30616"/>
    </ligand>
</feature>
<feature type="binding site" evidence="3">
    <location>
        <position position="930"/>
    </location>
    <ligand>
        <name>ATP</name>
        <dbReference type="ChEBI" id="CHEBI:30616"/>
    </ligand>
</feature>
<feature type="modified residue" description="Phosphotyrosine" evidence="32 33 34">
    <location>
        <position position="292"/>
    </location>
</feature>
<feature type="modified residue" description="Phosphoserine" evidence="34">
    <location>
        <position position="499"/>
    </location>
</feature>
<feature type="modified residue" description="Phosphoserine" evidence="1">
    <location>
        <position position="525"/>
    </location>
</feature>
<feature type="modified residue" description="Phosphotyrosine" evidence="1">
    <location>
        <position position="604"/>
    </location>
</feature>
<feature type="modified residue" description="Phosphoserine" evidence="32 33">
    <location>
        <position position="884"/>
    </location>
</feature>
<feature type="modified residue" description="Phosphotyrosine; by autocatalysis" evidence="14 26">
    <location>
        <position position="1054"/>
    </location>
</feature>
<feature type="modified residue" description="Phosphotyrosine" evidence="26">
    <location>
        <position position="1055"/>
    </location>
</feature>
<feature type="sequence variant" id="VAR_020597" description="In dbSNP:rs12720343." evidence="27">
    <original>R</original>
    <variation>H</variation>
    <location>
        <position position="4"/>
    </location>
</feature>
<feature type="sequence variant" id="VAR_037797" description="In dbSNP:rs1049619.">
    <original>A</original>
    <variation>V</variation>
    <location>
        <position position="81"/>
    </location>
</feature>
<feature type="sequence variant" id="VAR_020598" description="In dbSNP:rs12720263." evidence="27">
    <original>R</original>
    <variation>H</variation>
    <location>
        <position position="197"/>
    </location>
</feature>
<feature type="sequence variant" id="VAR_020599" description="In dbSNP:rs2304256." evidence="13 16 27">
    <original>V</original>
    <variation>F</variation>
    <location>
        <position position="362"/>
    </location>
</feature>
<feature type="sequence variant" id="VAR_020600" description="In dbSNP:rs2304255." evidence="13 27">
    <original>G</original>
    <variation>S</variation>
    <location>
        <position position="363"/>
    </location>
</feature>
<feature type="sequence variant" id="VAR_041870" description="In dbSNP:rs55956017." evidence="13">
    <original>V</original>
    <variation>M</variation>
    <location>
        <position position="386"/>
    </location>
</feature>
<feature type="sequence variant" id="VAR_037798" description="In dbSNP:rs2304254.">
    <original>R</original>
    <variation>Q</variation>
    <location>
        <position position="442"/>
    </location>
</feature>
<feature type="sequence variant" id="VAR_020286" description="In dbSNP:rs12720356." evidence="13 16 27">
    <original>I</original>
    <variation>S</variation>
    <location>
        <position position="684"/>
    </location>
</feature>
<feature type="sequence variant" id="VAR_041871" description="In dbSNP:rs55882956." evidence="13">
    <original>R</original>
    <variation>W</variation>
    <location>
        <position position="703"/>
    </location>
</feature>
<feature type="sequence variant" id="VAR_041872" description="In a colorectal adenocarcinoma sample; somatic mutation." evidence="13">
    <original>H</original>
    <variation>R</variation>
    <location>
        <position position="732"/>
    </location>
</feature>
<feature type="sequence variant" id="VAR_037799" description="In dbSNP:rs34046749.">
    <original>P</original>
    <variation>H</variation>
    <location>
        <position position="820"/>
    </location>
</feature>
<feature type="sequence variant" id="VAR_041873" description="In dbSNP:rs35018800." evidence="13">
    <original>A</original>
    <variation>V</variation>
    <location>
        <position position="928"/>
    </location>
</feature>
<feature type="sequence variant" id="VAR_041874" description="In dbSNP:rs34536443." evidence="13">
    <original>P</original>
    <variation>A</variation>
    <location>
        <position position="1104"/>
    </location>
</feature>
<feature type="sequence variant" id="VAR_041875" description="In dbSNP:rs55886939." evidence="13">
    <original>E</original>
    <variation>G</variation>
    <location>
        <position position="1163"/>
    </location>
</feature>
<feature type="mutagenesis site" description="Complete loss of catalytic activity." evidence="26">
    <original>K</original>
    <variation>R</variation>
    <location>
        <position position="930"/>
    </location>
</feature>
<feature type="mutagenesis site" description="Complete loss of catalytic activity." evidence="17">
    <original>D</original>
    <variation>N</variation>
    <location>
        <position position="1023"/>
    </location>
</feature>
<feature type="mutagenesis site" description="Reduces basal catalytic activity and abolishes IFN-dependent activation." evidence="26">
    <original>Y</original>
    <variation>F</variation>
    <location>
        <position position="1054"/>
    </location>
</feature>
<feature type="mutagenesis site" description="Reduces basal catalytic activity and abolishes IFN-dependent activation." evidence="26">
    <original>Y</original>
    <variation>F</variation>
    <location>
        <position position="1055"/>
    </location>
</feature>
<feature type="mutagenesis site" description="Does not affect phosphorylation state and enzymatic activity." evidence="26">
    <original>Y</original>
    <variation>F</variation>
    <location>
        <position position="1145"/>
    </location>
</feature>
<feature type="mutagenesis site" description="Does not affect phosphorylation state and enzymatic activity." evidence="26">
    <original>Y</original>
    <variation>F</variation>
    <location>
        <position position="1176"/>
    </location>
</feature>
<feature type="sequence conflict" description="In Ref. 1; CAA38449." evidence="28" ref="1">
    <original>L</original>
    <variation>V</variation>
    <location>
        <position position="869"/>
    </location>
</feature>
<feature type="sequence conflict" description="In Ref. 1; CAA38449." evidence="28" ref="1">
    <original>P</original>
    <variation>R</variation>
    <location>
        <position position="882"/>
    </location>
</feature>
<feature type="sequence conflict" description="In Ref. 1; CAA38449." evidence="28" ref="1">
    <original>SD</original>
    <variation>VG</variation>
    <location>
        <begin position="887"/>
        <end position="888"/>
    </location>
</feature>
<feature type="sequence conflict" description="In Ref. 1; CAA38449." evidence="28" ref="1">
    <original>V</original>
    <variation>T</variation>
    <location>
        <position position="891"/>
    </location>
</feature>
<feature type="sequence conflict" description="In Ref. 3; AAH14243." evidence="28" ref="3">
    <original>A</original>
    <variation>S</variation>
    <location>
        <position position="1016"/>
    </location>
</feature>
<feature type="sequence conflict" description="In Ref. 1; CAA38449." evidence="28" ref="1">
    <original>QH</original>
    <variation>HD</variation>
    <location>
        <begin position="1017"/>
        <end position="1018"/>
    </location>
</feature>
<feature type="strand" evidence="37">
    <location>
        <begin position="28"/>
        <end position="31"/>
    </location>
</feature>
<feature type="strand" evidence="37">
    <location>
        <begin position="42"/>
        <end position="46"/>
    </location>
</feature>
<feature type="strand" evidence="37">
    <location>
        <begin position="49"/>
        <end position="52"/>
    </location>
</feature>
<feature type="helix" evidence="37">
    <location>
        <begin position="53"/>
        <end position="64"/>
    </location>
</feature>
<feature type="helix" evidence="37">
    <location>
        <begin position="68"/>
        <end position="73"/>
    </location>
</feature>
<feature type="strand" evidence="37">
    <location>
        <begin position="74"/>
        <end position="78"/>
    </location>
</feature>
<feature type="turn" evidence="37">
    <location>
        <begin position="79"/>
        <end position="82"/>
    </location>
</feature>
<feature type="strand" evidence="37">
    <location>
        <begin position="83"/>
        <end position="85"/>
    </location>
</feature>
<feature type="strand" evidence="37">
    <location>
        <begin position="90"/>
        <end position="92"/>
    </location>
</feature>
<feature type="turn" evidence="37">
    <location>
        <begin position="93"/>
        <end position="98"/>
    </location>
</feature>
<feature type="strand" evidence="37">
    <location>
        <begin position="101"/>
        <end position="105"/>
    </location>
</feature>
<feature type="turn" evidence="37">
    <location>
        <begin position="110"/>
        <end position="113"/>
    </location>
</feature>
<feature type="strand" evidence="37">
    <location>
        <begin position="122"/>
        <end position="124"/>
    </location>
</feature>
<feature type="helix" evidence="37">
    <location>
        <begin position="146"/>
        <end position="161"/>
    </location>
</feature>
<feature type="helix" evidence="37">
    <location>
        <begin position="167"/>
        <end position="169"/>
    </location>
</feature>
<feature type="helix" evidence="37">
    <location>
        <begin position="173"/>
        <end position="198"/>
    </location>
</feature>
<feature type="helix" evidence="37">
    <location>
        <begin position="202"/>
        <end position="208"/>
    </location>
</feature>
<feature type="helix" evidence="37">
    <location>
        <begin position="211"/>
        <end position="213"/>
    </location>
</feature>
<feature type="helix" evidence="37">
    <location>
        <begin position="217"/>
        <end position="225"/>
    </location>
</feature>
<feature type="helix" evidence="37">
    <location>
        <begin position="228"/>
        <end position="243"/>
    </location>
</feature>
<feature type="helix" evidence="37">
    <location>
        <begin position="252"/>
        <end position="266"/>
    </location>
</feature>
<feature type="turn" evidence="37">
    <location>
        <begin position="268"/>
        <end position="271"/>
    </location>
</feature>
<feature type="strand" evidence="37">
    <location>
        <begin position="273"/>
        <end position="284"/>
    </location>
</feature>
<feature type="helix" evidence="37">
    <location>
        <begin position="285"/>
        <end position="287"/>
    </location>
</feature>
<feature type="strand" evidence="37">
    <location>
        <begin position="314"/>
        <end position="319"/>
    </location>
</feature>
<feature type="turn" evidence="37">
    <location>
        <begin position="320"/>
        <end position="322"/>
    </location>
</feature>
<feature type="strand" evidence="37">
    <location>
        <begin position="323"/>
        <end position="328"/>
    </location>
</feature>
<feature type="strand" evidence="37">
    <location>
        <begin position="375"/>
        <end position="378"/>
    </location>
</feature>
<feature type="helix" evidence="37">
    <location>
        <begin position="380"/>
        <end position="382"/>
    </location>
</feature>
<feature type="strand" evidence="37">
    <location>
        <begin position="383"/>
        <end position="389"/>
    </location>
</feature>
<feature type="strand" evidence="37">
    <location>
        <begin position="392"/>
        <end position="397"/>
    </location>
</feature>
<feature type="strand" evidence="37">
    <location>
        <begin position="400"/>
        <end position="406"/>
    </location>
</feature>
<feature type="helix" evidence="37">
    <location>
        <begin position="410"/>
        <end position="427"/>
    </location>
</feature>
<feature type="helix" evidence="37">
    <location>
        <begin position="436"/>
        <end position="438"/>
    </location>
</feature>
<feature type="helix" evidence="37">
    <location>
        <begin position="441"/>
        <end position="449"/>
    </location>
</feature>
<feature type="helix" evidence="37">
    <location>
        <begin position="457"/>
        <end position="464"/>
    </location>
</feature>
<feature type="strand" evidence="37">
    <location>
        <begin position="470"/>
        <end position="475"/>
    </location>
</feature>
<feature type="strand" evidence="37">
    <location>
        <begin position="483"/>
        <end position="492"/>
    </location>
</feature>
<feature type="strand" evidence="37">
    <location>
        <begin position="498"/>
        <end position="508"/>
    </location>
</feature>
<feature type="strand" evidence="37">
    <location>
        <begin position="514"/>
        <end position="516"/>
    </location>
</feature>
<feature type="strand" evidence="37">
    <location>
        <begin position="523"/>
        <end position="525"/>
    </location>
</feature>
<feature type="helix" evidence="37">
    <location>
        <begin position="526"/>
        <end position="533"/>
    </location>
</feature>
<feature type="strand" evidence="37">
    <location>
        <begin position="537"/>
        <end position="540"/>
    </location>
</feature>
<feature type="strand" evidence="37">
    <location>
        <begin position="543"/>
        <end position="546"/>
    </location>
</feature>
<feature type="strand" evidence="37">
    <location>
        <begin position="562"/>
        <end position="565"/>
    </location>
</feature>
<feature type="helix" evidence="39">
    <location>
        <begin position="586"/>
        <end position="588"/>
    </location>
</feature>
<feature type="strand" evidence="39">
    <location>
        <begin position="589"/>
        <end position="598"/>
    </location>
</feature>
<feature type="strand" evidence="39">
    <location>
        <begin position="601"/>
        <end position="609"/>
    </location>
</feature>
<feature type="strand" evidence="39">
    <location>
        <begin position="636"/>
        <end position="644"/>
    </location>
</feature>
<feature type="helix" evidence="39">
    <location>
        <begin position="649"/>
        <end position="663"/>
    </location>
</feature>
<feature type="strand" evidence="39">
    <location>
        <begin position="673"/>
        <end position="679"/>
    </location>
</feature>
<feature type="strand" evidence="39">
    <location>
        <begin position="682"/>
        <end position="688"/>
    </location>
</feature>
<feature type="helix" evidence="39">
    <location>
        <begin position="695"/>
        <end position="701"/>
    </location>
</feature>
<feature type="turn" evidence="39">
    <location>
        <begin position="702"/>
        <end position="704"/>
    </location>
</feature>
<feature type="helix" evidence="39">
    <location>
        <begin position="708"/>
        <end position="728"/>
    </location>
</feature>
<feature type="helix" evidence="39">
    <location>
        <begin position="737"/>
        <end position="739"/>
    </location>
</feature>
<feature type="strand" evidence="39">
    <location>
        <begin position="740"/>
        <end position="744"/>
    </location>
</feature>
<feature type="strand" evidence="39">
    <location>
        <begin position="754"/>
        <end position="757"/>
    </location>
</feature>
<feature type="helix" evidence="39">
    <location>
        <begin position="764"/>
        <end position="766"/>
    </location>
</feature>
<feature type="helix" evidence="39">
    <location>
        <begin position="769"/>
        <end position="774"/>
    </location>
</feature>
<feature type="turn" evidence="39">
    <location>
        <begin position="775"/>
        <end position="778"/>
    </location>
</feature>
<feature type="helix" evidence="39">
    <location>
        <begin position="781"/>
        <end position="783"/>
    </location>
</feature>
<feature type="helix" evidence="39">
    <location>
        <begin position="794"/>
        <end position="808"/>
    </location>
</feature>
<feature type="turn" evidence="39">
    <location>
        <begin position="809"/>
        <end position="811"/>
    </location>
</feature>
<feature type="turn" evidence="39">
    <location>
        <begin position="814"/>
        <end position="817"/>
    </location>
</feature>
<feature type="helix" evidence="39">
    <location>
        <begin position="820"/>
        <end position="828"/>
    </location>
</feature>
<feature type="helix" evidence="39">
    <location>
        <begin position="839"/>
        <end position="848"/>
    </location>
</feature>
<feature type="helix" evidence="39">
    <location>
        <begin position="853"/>
        <end position="855"/>
    </location>
</feature>
<feature type="helix" evidence="39">
    <location>
        <begin position="859"/>
        <end position="866"/>
    </location>
</feature>
<feature type="helix" evidence="35">
    <location>
        <begin position="894"/>
        <end position="896"/>
    </location>
</feature>
<feature type="strand" evidence="35">
    <location>
        <begin position="897"/>
        <end position="905"/>
    </location>
</feature>
<feature type="strand" evidence="35">
    <location>
        <begin position="907"/>
        <end position="916"/>
    </location>
</feature>
<feature type="strand" evidence="36">
    <location>
        <begin position="920"/>
        <end position="922"/>
    </location>
</feature>
<feature type="strand" evidence="35">
    <location>
        <begin position="925"/>
        <end position="932"/>
    </location>
</feature>
<feature type="helix" evidence="35">
    <location>
        <begin position="938"/>
        <end position="953"/>
    </location>
</feature>
<feature type="strand" evidence="35">
    <location>
        <begin position="962"/>
        <end position="968"/>
    </location>
</feature>
<feature type="turn" evidence="35">
    <location>
        <begin position="969"/>
        <end position="972"/>
    </location>
</feature>
<feature type="strand" evidence="35">
    <location>
        <begin position="973"/>
        <end position="978"/>
    </location>
</feature>
<feature type="helix" evidence="35">
    <location>
        <begin position="986"/>
        <end position="989"/>
    </location>
</feature>
<feature type="helix" evidence="35">
    <location>
        <begin position="990"/>
        <end position="992"/>
    </location>
</feature>
<feature type="helix" evidence="35">
    <location>
        <begin position="997"/>
        <end position="1016"/>
    </location>
</feature>
<feature type="helix" evidence="35">
    <location>
        <begin position="1026"/>
        <end position="1028"/>
    </location>
</feature>
<feature type="strand" evidence="35">
    <location>
        <begin position="1029"/>
        <end position="1031"/>
    </location>
</feature>
<feature type="strand" evidence="35">
    <location>
        <begin position="1037"/>
        <end position="1039"/>
    </location>
</feature>
<feature type="helix" evidence="35">
    <location>
        <begin position="1042"/>
        <end position="1044"/>
    </location>
</feature>
<feature type="strand" evidence="35">
    <location>
        <begin position="1053"/>
        <end position="1056"/>
    </location>
</feature>
<feature type="strand" evidence="38">
    <location>
        <begin position="1059"/>
        <end position="1061"/>
    </location>
</feature>
<feature type="helix" evidence="35">
    <location>
        <begin position="1065"/>
        <end position="1067"/>
    </location>
</feature>
<feature type="helix" evidence="35">
    <location>
        <begin position="1070"/>
        <end position="1075"/>
    </location>
</feature>
<feature type="strand" evidence="35">
    <location>
        <begin position="1077"/>
        <end position="1079"/>
    </location>
</feature>
<feature type="helix" evidence="35">
    <location>
        <begin position="1080"/>
        <end position="1095"/>
    </location>
</feature>
<feature type="turn" evidence="35">
    <location>
        <begin position="1096"/>
        <end position="1098"/>
    </location>
</feature>
<feature type="helix" evidence="35">
    <location>
        <begin position="1100"/>
        <end position="1102"/>
    </location>
</feature>
<feature type="helix" evidence="35">
    <location>
        <begin position="1104"/>
        <end position="1112"/>
    </location>
</feature>
<feature type="helix" evidence="35">
    <location>
        <begin position="1117"/>
        <end position="1129"/>
    </location>
</feature>
<feature type="helix" evidence="35">
    <location>
        <begin position="1142"/>
        <end position="1151"/>
    </location>
</feature>
<feature type="helix" evidence="35">
    <location>
        <begin position="1156"/>
        <end position="1158"/>
    </location>
</feature>
<feature type="helix" evidence="35">
    <location>
        <begin position="1162"/>
        <end position="1177"/>
    </location>
</feature>
<gene>
    <name type="primary">TYK2</name>
</gene>
<accession>P29597</accession>
<accession>Q6QB10</accession>
<accession>Q96CH0</accession>
<name>TYK2_HUMAN</name>
<proteinExistence type="evidence at protein level"/>
<protein>
    <recommendedName>
        <fullName>Non-receptor tyrosine-protein kinase TYK2</fullName>
        <ecNumber evidence="7 21">2.7.10.2</ecNumber>
    </recommendedName>
</protein>
<dbReference type="EC" id="2.7.10.2" evidence="7 21"/>
<dbReference type="EMBL" id="X54637">
    <property type="protein sequence ID" value="CAA38449.1"/>
    <property type="molecule type" value="mRNA"/>
</dbReference>
<dbReference type="EMBL" id="AY549314">
    <property type="protein sequence ID" value="AAS37680.1"/>
    <property type="molecule type" value="Genomic_DNA"/>
</dbReference>
<dbReference type="EMBL" id="BC014243">
    <property type="protein sequence ID" value="AAH14243.1"/>
    <property type="molecule type" value="mRNA"/>
</dbReference>
<dbReference type="CCDS" id="CCDS12236.1"/>
<dbReference type="PIR" id="S12127">
    <property type="entry name" value="TVHUY2"/>
</dbReference>
<dbReference type="RefSeq" id="NP_001393390.1">
    <property type="nucleotide sequence ID" value="NM_001406461.1"/>
</dbReference>
<dbReference type="RefSeq" id="NP_003322.3">
    <property type="nucleotide sequence ID" value="NM_003331.4"/>
</dbReference>
<dbReference type="RefSeq" id="XP_011526547.1">
    <property type="nucleotide sequence ID" value="XM_011528245.1"/>
</dbReference>
<dbReference type="PDB" id="3LXN">
    <property type="method" value="X-ray"/>
    <property type="resolution" value="2.50 A"/>
    <property type="chains" value="A=888-1182"/>
</dbReference>
<dbReference type="PDB" id="3LXP">
    <property type="method" value="X-ray"/>
    <property type="resolution" value="1.65 A"/>
    <property type="chains" value="A=888-1182"/>
</dbReference>
<dbReference type="PDB" id="3NYX">
    <property type="method" value="X-ray"/>
    <property type="resolution" value="2.50 A"/>
    <property type="chains" value="A=885-1176"/>
</dbReference>
<dbReference type="PDB" id="3NZ0">
    <property type="method" value="X-ray"/>
    <property type="resolution" value="2.00 A"/>
    <property type="chains" value="A=885-1176"/>
</dbReference>
<dbReference type="PDB" id="3ZON">
    <property type="method" value="X-ray"/>
    <property type="resolution" value="2.15 A"/>
    <property type="chains" value="A=541-873"/>
</dbReference>
<dbReference type="PDB" id="4GFO">
    <property type="method" value="X-ray"/>
    <property type="resolution" value="2.30 A"/>
    <property type="chains" value="A=884-1176"/>
</dbReference>
<dbReference type="PDB" id="4GIH">
    <property type="method" value="X-ray"/>
    <property type="resolution" value="2.00 A"/>
    <property type="chains" value="A=885-1176"/>
</dbReference>
<dbReference type="PDB" id="4GII">
    <property type="method" value="X-ray"/>
    <property type="resolution" value="2.31 A"/>
    <property type="chains" value="A=885-1176"/>
</dbReference>
<dbReference type="PDB" id="4GJ2">
    <property type="method" value="X-ray"/>
    <property type="resolution" value="2.40 A"/>
    <property type="chains" value="A=885-1176"/>
</dbReference>
<dbReference type="PDB" id="4GJ3">
    <property type="method" value="X-ray"/>
    <property type="resolution" value="2.50 A"/>
    <property type="chains" value="A=885-1176"/>
</dbReference>
<dbReference type="PDB" id="4GVJ">
    <property type="method" value="X-ray"/>
    <property type="resolution" value="2.03 A"/>
    <property type="chains" value="A=885-1176"/>
</dbReference>
<dbReference type="PDB" id="4OLI">
    <property type="method" value="X-ray"/>
    <property type="resolution" value="2.80 A"/>
    <property type="chains" value="A=566-1187"/>
</dbReference>
<dbReference type="PDB" id="4PO6">
    <property type="method" value="X-ray"/>
    <property type="resolution" value="1.99 A"/>
    <property type="chains" value="A=23-583"/>
</dbReference>
<dbReference type="PDB" id="4PY1">
    <property type="method" value="X-ray"/>
    <property type="resolution" value="2.16 A"/>
    <property type="chains" value="A=888-1182"/>
</dbReference>
<dbReference type="PDB" id="4WOV">
    <property type="method" value="X-ray"/>
    <property type="resolution" value="1.80 A"/>
    <property type="chains" value="A/B=575-869"/>
</dbReference>
<dbReference type="PDB" id="5C01">
    <property type="method" value="X-ray"/>
    <property type="resolution" value="2.15 A"/>
    <property type="chains" value="A/B=556-871"/>
</dbReference>
<dbReference type="PDB" id="5C03">
    <property type="method" value="X-ray"/>
    <property type="resolution" value="1.90 A"/>
    <property type="chains" value="A/B=556-871"/>
</dbReference>
<dbReference type="PDB" id="5F1Z">
    <property type="method" value="X-ray"/>
    <property type="resolution" value="2.65 A"/>
    <property type="chains" value="A=884-1176"/>
</dbReference>
<dbReference type="PDB" id="5F20">
    <property type="method" value="X-ray"/>
    <property type="resolution" value="2.91 A"/>
    <property type="chains" value="A=884-1176"/>
</dbReference>
<dbReference type="PDB" id="5TKD">
    <property type="method" value="X-ray"/>
    <property type="resolution" value="1.92 A"/>
    <property type="chains" value="A/B=575-869"/>
</dbReference>
<dbReference type="PDB" id="5WAL">
    <property type="method" value="X-ray"/>
    <property type="resolution" value="2.45 A"/>
    <property type="chains" value="A=884-1176"/>
</dbReference>
<dbReference type="PDB" id="6AAM">
    <property type="method" value="X-ray"/>
    <property type="resolution" value="1.98 A"/>
    <property type="chains" value="A=888-1182"/>
</dbReference>
<dbReference type="PDB" id="6DBK">
    <property type="method" value="X-ray"/>
    <property type="resolution" value="2.00 A"/>
    <property type="chains" value="A=888-1182"/>
</dbReference>
<dbReference type="PDB" id="6DBM">
    <property type="method" value="X-ray"/>
    <property type="resolution" value="2.37 A"/>
    <property type="chains" value="A=888-1182"/>
</dbReference>
<dbReference type="PDB" id="6NSL">
    <property type="method" value="X-ray"/>
    <property type="resolution" value="2.15 A"/>
    <property type="chains" value="A/B=575-869"/>
</dbReference>
<dbReference type="PDB" id="6NZE">
    <property type="method" value="X-ray"/>
    <property type="resolution" value="1.96 A"/>
    <property type="chains" value="A/B=575-869"/>
</dbReference>
<dbReference type="PDB" id="6NZF">
    <property type="method" value="X-ray"/>
    <property type="resolution" value="2.39 A"/>
    <property type="chains" value="A/B=575-869"/>
</dbReference>
<dbReference type="PDB" id="6NZH">
    <property type="method" value="X-ray"/>
    <property type="resolution" value="2.73 A"/>
    <property type="chains" value="A/B=575-869"/>
</dbReference>
<dbReference type="PDB" id="6NZP">
    <property type="method" value="X-ray"/>
    <property type="resolution" value="2.35 A"/>
    <property type="chains" value="A/B=575-869"/>
</dbReference>
<dbReference type="PDB" id="6NZQ">
    <property type="method" value="X-ray"/>
    <property type="resolution" value="2.11 A"/>
    <property type="chains" value="A/B=575-869"/>
</dbReference>
<dbReference type="PDB" id="6NZR">
    <property type="method" value="X-ray"/>
    <property type="resolution" value="2.56 A"/>
    <property type="chains" value="A/B=575-869"/>
</dbReference>
<dbReference type="PDB" id="6OVA">
    <property type="method" value="X-ray"/>
    <property type="resolution" value="2.50 A"/>
    <property type="chains" value="A=884-1176"/>
</dbReference>
<dbReference type="PDB" id="6VNS">
    <property type="method" value="X-ray"/>
    <property type="resolution" value="2.09 A"/>
    <property type="chains" value="A=888-1182"/>
</dbReference>
<dbReference type="PDB" id="6VNV">
    <property type="method" value="X-ray"/>
    <property type="resolution" value="2.15 A"/>
    <property type="chains" value="A=888-1182"/>
</dbReference>
<dbReference type="PDB" id="6VNX">
    <property type="method" value="X-ray"/>
    <property type="resolution" value="2.18 A"/>
    <property type="chains" value="A=888-1182"/>
</dbReference>
<dbReference type="PDB" id="6VNY">
    <property type="method" value="X-ray"/>
    <property type="resolution" value="2.30 A"/>
    <property type="chains" value="A=888-1182"/>
</dbReference>
<dbReference type="PDB" id="6X8F">
    <property type="method" value="X-ray"/>
    <property type="resolution" value="2.15 A"/>
    <property type="chains" value="A/C=888-1182"/>
</dbReference>
<dbReference type="PDB" id="6X8G">
    <property type="method" value="X-ray"/>
    <property type="resolution" value="2.21 A"/>
    <property type="chains" value="A=888-1182"/>
</dbReference>
<dbReference type="PDB" id="7AX4">
    <property type="method" value="X-ray"/>
    <property type="resolution" value="2.12 A"/>
    <property type="chains" value="A/B=575-869"/>
</dbReference>
<dbReference type="PDB" id="7K7O">
    <property type="method" value="X-ray"/>
    <property type="resolution" value="2.82 A"/>
    <property type="chains" value="A/B=575-869"/>
</dbReference>
<dbReference type="PDB" id="7K7Q">
    <property type="method" value="X-ray"/>
    <property type="resolution" value="2.27 A"/>
    <property type="chains" value="A/B=575-869"/>
</dbReference>
<dbReference type="PDB" id="7UYR">
    <property type="method" value="X-ray"/>
    <property type="resolution" value="2.15 A"/>
    <property type="chains" value="A=889-1177"/>
</dbReference>
<dbReference type="PDB" id="7UYS">
    <property type="method" value="X-ray"/>
    <property type="resolution" value="2.15 A"/>
    <property type="chains" value="A=889-1177"/>
</dbReference>
<dbReference type="PDB" id="7UYT">
    <property type="method" value="X-ray"/>
    <property type="resolution" value="2.14 A"/>
    <property type="chains" value="A=889-1177"/>
</dbReference>
<dbReference type="PDB" id="7UYU">
    <property type="method" value="X-ray"/>
    <property type="resolution" value="2.05 A"/>
    <property type="chains" value="A=889-1177"/>
</dbReference>
<dbReference type="PDB" id="8EXN">
    <property type="method" value="X-ray"/>
    <property type="resolution" value="2.15 A"/>
    <property type="chains" value="D=1048-1062"/>
</dbReference>
<dbReference type="PDB" id="8EYC">
    <property type="method" value="X-ray"/>
    <property type="resolution" value="2.99 A"/>
    <property type="chains" value="C=1048-1062"/>
</dbReference>
<dbReference type="PDB" id="8S98">
    <property type="method" value="X-ray"/>
    <property type="resolution" value="1.87 A"/>
    <property type="chains" value="A/B/C=575-869"/>
</dbReference>
<dbReference type="PDB" id="8S99">
    <property type="method" value="X-ray"/>
    <property type="resolution" value="1.71 A"/>
    <property type="chains" value="A/B/C=575-869"/>
</dbReference>
<dbReference type="PDB" id="8S9A">
    <property type="method" value="X-ray"/>
    <property type="resolution" value="1.83 A"/>
    <property type="chains" value="A/B/C=575-869"/>
</dbReference>
<dbReference type="PDB" id="8TB5">
    <property type="method" value="X-ray"/>
    <property type="resolution" value="2.32 A"/>
    <property type="chains" value="A/B=566-870"/>
</dbReference>
<dbReference type="PDB" id="8TB6">
    <property type="method" value="X-ray"/>
    <property type="resolution" value="1.96 A"/>
    <property type="chains" value="A/B=566-870"/>
</dbReference>
<dbReference type="PDBsum" id="3LXN"/>
<dbReference type="PDBsum" id="3LXP"/>
<dbReference type="PDBsum" id="3NYX"/>
<dbReference type="PDBsum" id="3NZ0"/>
<dbReference type="PDBsum" id="3ZON"/>
<dbReference type="PDBsum" id="4GFO"/>
<dbReference type="PDBsum" id="4GIH"/>
<dbReference type="PDBsum" id="4GII"/>
<dbReference type="PDBsum" id="4GJ2"/>
<dbReference type="PDBsum" id="4GJ3"/>
<dbReference type="PDBsum" id="4GVJ"/>
<dbReference type="PDBsum" id="4OLI"/>
<dbReference type="PDBsum" id="4PO6"/>
<dbReference type="PDBsum" id="4PY1"/>
<dbReference type="PDBsum" id="4WOV"/>
<dbReference type="PDBsum" id="5C01"/>
<dbReference type="PDBsum" id="5C03"/>
<dbReference type="PDBsum" id="5F1Z"/>
<dbReference type="PDBsum" id="5F20"/>
<dbReference type="PDBsum" id="5TKD"/>
<dbReference type="PDBsum" id="5WAL"/>
<dbReference type="PDBsum" id="6AAM"/>
<dbReference type="PDBsum" id="6DBK"/>
<dbReference type="PDBsum" id="6DBM"/>
<dbReference type="PDBsum" id="6NSL"/>
<dbReference type="PDBsum" id="6NZE"/>
<dbReference type="PDBsum" id="6NZF"/>
<dbReference type="PDBsum" id="6NZH"/>
<dbReference type="PDBsum" id="6NZP"/>
<dbReference type="PDBsum" id="6NZQ"/>
<dbReference type="PDBsum" id="6NZR"/>
<dbReference type="PDBsum" id="6OVA"/>
<dbReference type="PDBsum" id="6VNS"/>
<dbReference type="PDBsum" id="6VNV"/>
<dbReference type="PDBsum" id="6VNX"/>
<dbReference type="PDBsum" id="6VNY"/>
<dbReference type="PDBsum" id="6X8F"/>
<dbReference type="PDBsum" id="6X8G"/>
<dbReference type="PDBsum" id="7AX4"/>
<dbReference type="PDBsum" id="7K7O"/>
<dbReference type="PDBsum" id="7K7Q"/>
<dbReference type="PDBsum" id="7UYR"/>
<dbReference type="PDBsum" id="7UYS"/>
<dbReference type="PDBsum" id="7UYT"/>
<dbReference type="PDBsum" id="7UYU"/>
<dbReference type="PDBsum" id="8EXN"/>
<dbReference type="PDBsum" id="8EYC"/>
<dbReference type="PDBsum" id="8S98"/>
<dbReference type="PDBsum" id="8S99"/>
<dbReference type="PDBsum" id="8S9A"/>
<dbReference type="PDBsum" id="8TB5"/>
<dbReference type="PDBsum" id="8TB6"/>
<dbReference type="SMR" id="P29597"/>
<dbReference type="BioGRID" id="113148">
    <property type="interactions" value="157"/>
</dbReference>
<dbReference type="ComplexPortal" id="CPX-506">
    <property type="entry name" value="Interleukin-5 receptor-ligand complex"/>
</dbReference>
<dbReference type="CORUM" id="P29597"/>
<dbReference type="DIP" id="DIP-1062N"/>
<dbReference type="FunCoup" id="P29597">
    <property type="interactions" value="1924"/>
</dbReference>
<dbReference type="IntAct" id="P29597">
    <property type="interactions" value="111"/>
</dbReference>
<dbReference type="MINT" id="P29597"/>
<dbReference type="STRING" id="9606.ENSP00000431885"/>
<dbReference type="BindingDB" id="P29597"/>
<dbReference type="ChEMBL" id="CHEMBL3553"/>
<dbReference type="DrugBank" id="DB04716">
    <property type="generic name" value="2-tert-butyl-9-fluoro-1,6-dihydrobenzo[h]imidazo[4,5-f]isoquinolin-7-one"/>
</dbReference>
<dbReference type="DrugBank" id="DB14973">
    <property type="generic name" value="Abrocitinib"/>
</dbReference>
<dbReference type="DrugBank" id="DB11817">
    <property type="generic name" value="Baricitinib"/>
</dbReference>
<dbReference type="DrugBank" id="DB16133">
    <property type="generic name" value="Delgocitinib"/>
</dbReference>
<dbReference type="DrugBank" id="DB16650">
    <property type="generic name" value="Deucravacitinib"/>
</dbReference>
<dbReference type="DrugBank" id="DB18847">
    <property type="generic name" value="Deuruxolitinib"/>
</dbReference>
<dbReference type="DrugBank" id="DB12010">
    <property type="generic name" value="Fostamatinib"/>
</dbReference>
<dbReference type="DrugBank" id="DB11763">
    <property type="generic name" value="Momelotinib"/>
</dbReference>
<dbReference type="DrugBank" id="DB15003">
    <property type="generic name" value="PF-06700841"/>
</dbReference>
<dbReference type="DrugBank" id="DB08877">
    <property type="generic name" value="Ruxolitinib"/>
</dbReference>
<dbReference type="DrugBank" id="DB08895">
    <property type="generic name" value="Tofacitinib"/>
</dbReference>
<dbReference type="DrugCentral" id="P29597"/>
<dbReference type="GuidetoPHARMACOLOGY" id="2269"/>
<dbReference type="GlyGen" id="P29597">
    <property type="glycosylation" value="2 sites, 1 O-linked glycan (1 site)"/>
</dbReference>
<dbReference type="iPTMnet" id="P29597"/>
<dbReference type="PhosphoSitePlus" id="P29597"/>
<dbReference type="BioMuta" id="TYK2"/>
<dbReference type="DMDM" id="56405328"/>
<dbReference type="CPTAC" id="CPTAC-2821"/>
<dbReference type="CPTAC" id="CPTAC-3206"/>
<dbReference type="CPTAC" id="CPTAC-3207"/>
<dbReference type="jPOST" id="P29597"/>
<dbReference type="MassIVE" id="P29597"/>
<dbReference type="PaxDb" id="9606-ENSP00000431885"/>
<dbReference type="PeptideAtlas" id="P29597"/>
<dbReference type="ProteomicsDB" id="54601"/>
<dbReference type="Pumba" id="P29597"/>
<dbReference type="Antibodypedia" id="716">
    <property type="antibodies" value="711 antibodies from 42 providers"/>
</dbReference>
<dbReference type="DNASU" id="7297"/>
<dbReference type="Ensembl" id="ENST00000525621.6">
    <property type="protein sequence ID" value="ENSP00000431885.1"/>
    <property type="gene ID" value="ENSG00000105397.16"/>
</dbReference>
<dbReference type="Ensembl" id="ENST00000531836.7">
    <property type="protein sequence ID" value="ENSP00000436175.2"/>
    <property type="gene ID" value="ENSG00000105397.16"/>
</dbReference>
<dbReference type="GeneID" id="7297"/>
<dbReference type="KEGG" id="hsa:7297"/>
<dbReference type="MANE-Select" id="ENST00000525621.6">
    <property type="protein sequence ID" value="ENSP00000431885.1"/>
    <property type="RefSeq nucleotide sequence ID" value="NM_003331.5"/>
    <property type="RefSeq protein sequence ID" value="NP_003322.3"/>
</dbReference>
<dbReference type="UCSC" id="uc002moc.5">
    <property type="organism name" value="human"/>
</dbReference>
<dbReference type="AGR" id="HGNC:12440"/>
<dbReference type="CTD" id="7297"/>
<dbReference type="DisGeNET" id="7297"/>
<dbReference type="GeneCards" id="TYK2"/>
<dbReference type="HGNC" id="HGNC:12440">
    <property type="gene designation" value="TYK2"/>
</dbReference>
<dbReference type="HPA" id="ENSG00000105397">
    <property type="expression patterns" value="Low tissue specificity"/>
</dbReference>
<dbReference type="MalaCards" id="TYK2"/>
<dbReference type="MIM" id="176941">
    <property type="type" value="gene"/>
</dbReference>
<dbReference type="MIM" id="611521">
    <property type="type" value="phenotype"/>
</dbReference>
<dbReference type="neXtProt" id="NX_P29597"/>
<dbReference type="OpenTargets" id="ENSG00000105397"/>
<dbReference type="Orphanet" id="98842">
    <property type="disease" value="Lymphomatoid papulosis"/>
</dbReference>
<dbReference type="Orphanet" id="300865">
    <property type="disease" value="Primary cutaneous anaplastic large cell lymphoma"/>
</dbReference>
<dbReference type="Orphanet" id="331226">
    <property type="disease" value="Susceptibility to infection due to TYK2 deficiency"/>
</dbReference>
<dbReference type="PharmGKB" id="PA37094"/>
<dbReference type="VEuPathDB" id="HostDB:ENSG00000105397"/>
<dbReference type="eggNOG" id="KOG0197">
    <property type="taxonomic scope" value="Eukaryota"/>
</dbReference>
<dbReference type="GeneTree" id="ENSGT00940000159869"/>
<dbReference type="InParanoid" id="P29597"/>
<dbReference type="OMA" id="QAKHEFV"/>
<dbReference type="OrthoDB" id="1915767at2759"/>
<dbReference type="PAN-GO" id="P29597">
    <property type="GO annotations" value="7 GO annotations based on evolutionary models"/>
</dbReference>
<dbReference type="PhylomeDB" id="P29597"/>
<dbReference type="TreeFam" id="TF327041"/>
<dbReference type="BRENDA" id="2.7.10.2">
    <property type="organism ID" value="2681"/>
</dbReference>
<dbReference type="PathwayCommons" id="P29597"/>
<dbReference type="Reactome" id="R-HSA-1059683">
    <property type="pathway name" value="Interleukin-6 signaling"/>
</dbReference>
<dbReference type="Reactome" id="R-HSA-110056">
    <property type="pathway name" value="MAPK3 (ERK1) activation"/>
</dbReference>
<dbReference type="Reactome" id="R-HSA-112411">
    <property type="pathway name" value="MAPK1 (ERK2) activation"/>
</dbReference>
<dbReference type="Reactome" id="R-HSA-449836">
    <property type="pathway name" value="Other interleukin signaling"/>
</dbReference>
<dbReference type="Reactome" id="R-HSA-6783783">
    <property type="pathway name" value="Interleukin-10 signaling"/>
</dbReference>
<dbReference type="Reactome" id="R-HSA-6785807">
    <property type="pathway name" value="Interleukin-4 and Interleukin-13 signaling"/>
</dbReference>
<dbReference type="Reactome" id="R-HSA-6788467">
    <property type="pathway name" value="IL-6-type cytokine receptor ligand interactions"/>
</dbReference>
<dbReference type="Reactome" id="R-HSA-8854691">
    <property type="pathway name" value="Interleukin-20 family signaling"/>
</dbReference>
<dbReference type="Reactome" id="R-HSA-8984722">
    <property type="pathway name" value="Interleukin-35 Signalling"/>
</dbReference>
<dbReference type="Reactome" id="R-HSA-9020591">
    <property type="pathway name" value="Interleukin-12 signaling"/>
</dbReference>
<dbReference type="Reactome" id="R-HSA-9020933">
    <property type="pathway name" value="Interleukin-23 signaling"/>
</dbReference>
<dbReference type="Reactome" id="R-HSA-9020956">
    <property type="pathway name" value="Interleukin-27 signaling"/>
</dbReference>
<dbReference type="Reactome" id="R-HSA-909733">
    <property type="pathway name" value="Interferon alpha/beta signaling"/>
</dbReference>
<dbReference type="Reactome" id="R-HSA-912694">
    <property type="pathway name" value="Regulation of IFNA/IFNB signaling"/>
</dbReference>
<dbReference type="Reactome" id="R-HSA-9674555">
    <property type="pathway name" value="Signaling by CSF3 (G-CSF)"/>
</dbReference>
<dbReference type="Reactome" id="R-HSA-9679191">
    <property type="pathway name" value="Potential therapeutics for SARS"/>
</dbReference>
<dbReference type="Reactome" id="R-HSA-9705462">
    <property type="pathway name" value="Inactivation of CSF3 (G-CSF) signaling"/>
</dbReference>
<dbReference type="Reactome" id="R-HSA-9705671">
    <property type="pathway name" value="SARS-CoV-2 activates/modulates innate and adaptive immune responses"/>
</dbReference>
<dbReference type="Reactome" id="R-HSA-9725370">
    <property type="pathway name" value="Signaling by ALK fusions and activated point mutants"/>
</dbReference>
<dbReference type="Reactome" id="R-HSA-9833109">
    <property type="pathway name" value="Evasion by RSV of host interferon responses"/>
</dbReference>
<dbReference type="SignaLink" id="P29597"/>
<dbReference type="SIGNOR" id="P29597"/>
<dbReference type="BioGRID-ORCS" id="7297">
    <property type="hits" value="22 hits in 1198 CRISPR screens"/>
</dbReference>
<dbReference type="ChiTaRS" id="TYK2">
    <property type="organism name" value="human"/>
</dbReference>
<dbReference type="EvolutionaryTrace" id="P29597"/>
<dbReference type="GeneWiki" id="Tyrosine_kinase_2"/>
<dbReference type="GenomeRNAi" id="7297"/>
<dbReference type="Pharos" id="P29597">
    <property type="development level" value="Tclin"/>
</dbReference>
<dbReference type="PRO" id="PR:P29597"/>
<dbReference type="Proteomes" id="UP000005640">
    <property type="component" value="Chromosome 19"/>
</dbReference>
<dbReference type="RNAct" id="P29597">
    <property type="molecule type" value="protein"/>
</dbReference>
<dbReference type="Bgee" id="ENSG00000105397">
    <property type="expression patterns" value="Expressed in granulocyte and 195 other cell types or tissues"/>
</dbReference>
<dbReference type="ExpressionAtlas" id="P29597">
    <property type="expression patterns" value="baseline and differential"/>
</dbReference>
<dbReference type="GO" id="GO:0005737">
    <property type="term" value="C:cytoplasm"/>
    <property type="evidence" value="ECO:0000314"/>
    <property type="project" value="BHF-UCL"/>
</dbReference>
<dbReference type="GO" id="GO:0009898">
    <property type="term" value="C:cytoplasmic side of plasma membrane"/>
    <property type="evidence" value="ECO:0000305"/>
    <property type="project" value="UniProt"/>
</dbReference>
<dbReference type="GO" id="GO:0005856">
    <property type="term" value="C:cytoskeleton"/>
    <property type="evidence" value="ECO:0007669"/>
    <property type="project" value="InterPro"/>
</dbReference>
<dbReference type="GO" id="GO:0005829">
    <property type="term" value="C:cytosol"/>
    <property type="evidence" value="ECO:0000318"/>
    <property type="project" value="GO_Central"/>
</dbReference>
<dbReference type="GO" id="GO:0070062">
    <property type="term" value="C:extracellular exosome"/>
    <property type="evidence" value="ECO:0007005"/>
    <property type="project" value="UniProtKB"/>
</dbReference>
<dbReference type="GO" id="GO:0031234">
    <property type="term" value="C:extrinsic component of cytoplasmic side of plasma membrane"/>
    <property type="evidence" value="ECO:0000305"/>
    <property type="project" value="UniProt"/>
</dbReference>
<dbReference type="GO" id="GO:0019897">
    <property type="term" value="C:extrinsic component of plasma membrane"/>
    <property type="evidence" value="ECO:0000304"/>
    <property type="project" value="UniProt"/>
</dbReference>
<dbReference type="GO" id="GO:0042022">
    <property type="term" value="C:interleukin-12 receptor complex"/>
    <property type="evidence" value="ECO:0000353"/>
    <property type="project" value="ComplexPortal"/>
</dbReference>
<dbReference type="GO" id="GO:0072536">
    <property type="term" value="C:interleukin-23 receptor complex"/>
    <property type="evidence" value="ECO:0000353"/>
    <property type="project" value="ComplexPortal"/>
</dbReference>
<dbReference type="GO" id="GO:0005634">
    <property type="term" value="C:nucleus"/>
    <property type="evidence" value="ECO:0000314"/>
    <property type="project" value="BHF-UCL"/>
</dbReference>
<dbReference type="GO" id="GO:0005886">
    <property type="term" value="C:plasma membrane"/>
    <property type="evidence" value="ECO:0000353"/>
    <property type="project" value="ComplexPortal"/>
</dbReference>
<dbReference type="GO" id="GO:0043235">
    <property type="term" value="C:receptor complex"/>
    <property type="evidence" value="ECO:0000353"/>
    <property type="project" value="ComplexPortal"/>
</dbReference>
<dbReference type="GO" id="GO:0005524">
    <property type="term" value="F:ATP binding"/>
    <property type="evidence" value="ECO:0007669"/>
    <property type="project" value="UniProtKB-KW"/>
</dbReference>
<dbReference type="GO" id="GO:0005131">
    <property type="term" value="F:growth hormone receptor binding"/>
    <property type="evidence" value="ECO:0000353"/>
    <property type="project" value="BHF-UCL"/>
</dbReference>
<dbReference type="GO" id="GO:0004715">
    <property type="term" value="F:non-membrane spanning protein tyrosine kinase activity"/>
    <property type="evidence" value="ECO:0000314"/>
    <property type="project" value="UniProtKB"/>
</dbReference>
<dbReference type="GO" id="GO:0004713">
    <property type="term" value="F:protein tyrosine kinase activity"/>
    <property type="evidence" value="ECO:0000314"/>
    <property type="project" value="UniProt"/>
</dbReference>
<dbReference type="GO" id="GO:0030154">
    <property type="term" value="P:cell differentiation"/>
    <property type="evidence" value="ECO:0000318"/>
    <property type="project" value="GO_Central"/>
</dbReference>
<dbReference type="GO" id="GO:0008283">
    <property type="term" value="P:cell population proliferation"/>
    <property type="evidence" value="ECO:0007669"/>
    <property type="project" value="Ensembl"/>
</dbReference>
<dbReference type="GO" id="GO:0007259">
    <property type="term" value="P:cell surface receptor signaling pathway via JAK-STAT"/>
    <property type="evidence" value="ECO:0000314"/>
    <property type="project" value="UniProtKB"/>
</dbReference>
<dbReference type="GO" id="GO:0098586">
    <property type="term" value="P:cellular response to virus"/>
    <property type="evidence" value="ECO:0000303"/>
    <property type="project" value="ComplexPortal"/>
</dbReference>
<dbReference type="GO" id="GO:0019221">
    <property type="term" value="P:cytokine-mediated signaling pathway"/>
    <property type="evidence" value="ECO:0000318"/>
    <property type="project" value="GO_Central"/>
</dbReference>
<dbReference type="GO" id="GO:0060397">
    <property type="term" value="P:growth hormone receptor signaling pathway via JAK-STAT"/>
    <property type="evidence" value="ECO:0000318"/>
    <property type="project" value="GO_Central"/>
</dbReference>
<dbReference type="GO" id="GO:0006955">
    <property type="term" value="P:immune response"/>
    <property type="evidence" value="ECO:0000303"/>
    <property type="project" value="ComplexPortal"/>
</dbReference>
<dbReference type="GO" id="GO:0140105">
    <property type="term" value="P:interleukin-10-mediated signaling pathway"/>
    <property type="evidence" value="ECO:0000314"/>
    <property type="project" value="UniProt"/>
</dbReference>
<dbReference type="GO" id="GO:0035722">
    <property type="term" value="P:interleukin-12-mediated signaling pathway"/>
    <property type="evidence" value="ECO:0000314"/>
    <property type="project" value="UniProt"/>
</dbReference>
<dbReference type="GO" id="GO:0038155">
    <property type="term" value="P:interleukin-23-mediated signaling pathway"/>
    <property type="evidence" value="ECO:0000314"/>
    <property type="project" value="UniProt"/>
</dbReference>
<dbReference type="GO" id="GO:0035556">
    <property type="term" value="P:intracellular signal transduction"/>
    <property type="evidence" value="ECO:0000318"/>
    <property type="project" value="GO_Central"/>
</dbReference>
<dbReference type="GO" id="GO:0032740">
    <property type="term" value="P:positive regulation of interleukin-17 production"/>
    <property type="evidence" value="ECO:0000303"/>
    <property type="project" value="ComplexPortal"/>
</dbReference>
<dbReference type="GO" id="GO:0032819">
    <property type="term" value="P:positive regulation of natural killer cell proliferation"/>
    <property type="evidence" value="ECO:0000314"/>
    <property type="project" value="ComplexPortal"/>
</dbReference>
<dbReference type="GO" id="GO:0051142">
    <property type="term" value="P:positive regulation of NK T cell proliferation"/>
    <property type="evidence" value="ECO:0000314"/>
    <property type="project" value="ComplexPortal"/>
</dbReference>
<dbReference type="GO" id="GO:1900182">
    <property type="term" value="P:positive regulation of protein localization to nucleus"/>
    <property type="evidence" value="ECO:0000314"/>
    <property type="project" value="UniProt"/>
</dbReference>
<dbReference type="GO" id="GO:0046427">
    <property type="term" value="P:positive regulation of receptor signaling pathway via JAK-STAT"/>
    <property type="evidence" value="ECO:0000314"/>
    <property type="project" value="ComplexPortal"/>
</dbReference>
<dbReference type="GO" id="GO:0042102">
    <property type="term" value="P:positive regulation of T cell proliferation"/>
    <property type="evidence" value="ECO:0000314"/>
    <property type="project" value="ComplexPortal"/>
</dbReference>
<dbReference type="GO" id="GO:2000318">
    <property type="term" value="P:positive regulation of T-helper 17 type immune response"/>
    <property type="evidence" value="ECO:0000303"/>
    <property type="project" value="ComplexPortal"/>
</dbReference>
<dbReference type="GO" id="GO:0032729">
    <property type="term" value="P:positive regulation of type II interferon production"/>
    <property type="evidence" value="ECO:0000314"/>
    <property type="project" value="ComplexPortal"/>
</dbReference>
<dbReference type="GO" id="GO:0006468">
    <property type="term" value="P:protein phosphorylation"/>
    <property type="evidence" value="ECO:0000304"/>
    <property type="project" value="ProtInc"/>
</dbReference>
<dbReference type="GO" id="GO:0060337">
    <property type="term" value="P:type I interferon-mediated signaling pathway"/>
    <property type="evidence" value="ECO:0000314"/>
    <property type="project" value="UniProtKB"/>
</dbReference>
<dbReference type="GO" id="GO:0060333">
    <property type="term" value="P:type II interferon-mediated signaling pathway"/>
    <property type="evidence" value="ECO:0000314"/>
    <property type="project" value="UniProtKB"/>
</dbReference>
<dbReference type="GO" id="GO:0038196">
    <property type="term" value="P:type III interferon-mediated signaling pathway"/>
    <property type="evidence" value="ECO:0000303"/>
    <property type="project" value="ComplexPortal"/>
</dbReference>
<dbReference type="CDD" id="cd05076">
    <property type="entry name" value="PTK_Tyk2_rpt1"/>
    <property type="match status" value="1"/>
</dbReference>
<dbReference type="CDD" id="cd05080">
    <property type="entry name" value="PTKc_Tyk2_rpt2"/>
    <property type="match status" value="1"/>
</dbReference>
<dbReference type="FunFam" id="1.10.510.10:FF:000110">
    <property type="entry name" value="Tyrosine-protein kinase"/>
    <property type="match status" value="1"/>
</dbReference>
<dbReference type="FunFam" id="3.30.200.20:FF:000084">
    <property type="entry name" value="Tyrosine-protein kinase"/>
    <property type="match status" value="1"/>
</dbReference>
<dbReference type="FunFam" id="3.30.200.20:FF:000522">
    <property type="entry name" value="Tyrosine-protein kinase"/>
    <property type="match status" value="1"/>
</dbReference>
<dbReference type="FunFam" id="1.10.510.10:FF:000114">
    <property type="entry name" value="Tyrosine-protein kinase JAK2"/>
    <property type="match status" value="1"/>
</dbReference>
<dbReference type="Gene3D" id="3.30.200.20">
    <property type="entry name" value="Phosphorylase Kinase, domain 1"/>
    <property type="match status" value="2"/>
</dbReference>
<dbReference type="Gene3D" id="1.10.510.10">
    <property type="entry name" value="Transferase(Phosphotransferase) domain 1"/>
    <property type="match status" value="2"/>
</dbReference>
<dbReference type="InterPro" id="IPR019749">
    <property type="entry name" value="Band_41_domain"/>
</dbReference>
<dbReference type="InterPro" id="IPR035963">
    <property type="entry name" value="FERM_2"/>
</dbReference>
<dbReference type="InterPro" id="IPR000299">
    <property type="entry name" value="FERM_domain"/>
</dbReference>
<dbReference type="InterPro" id="IPR041155">
    <property type="entry name" value="FERM_F1"/>
</dbReference>
<dbReference type="InterPro" id="IPR041046">
    <property type="entry name" value="FERM_F2"/>
</dbReference>
<dbReference type="InterPro" id="IPR051286">
    <property type="entry name" value="JAK"/>
</dbReference>
<dbReference type="InterPro" id="IPR041381">
    <property type="entry name" value="JAK1-3/TYK2_PHL_dom"/>
</dbReference>
<dbReference type="InterPro" id="IPR011009">
    <property type="entry name" value="Kinase-like_dom_sf"/>
</dbReference>
<dbReference type="InterPro" id="IPR000719">
    <property type="entry name" value="Prot_kinase_dom"/>
</dbReference>
<dbReference type="InterPro" id="IPR017441">
    <property type="entry name" value="Protein_kinase_ATP_BS"/>
</dbReference>
<dbReference type="InterPro" id="IPR001245">
    <property type="entry name" value="Ser-Thr/Tyr_kinase_cat_dom"/>
</dbReference>
<dbReference type="InterPro" id="IPR000980">
    <property type="entry name" value="SH2"/>
</dbReference>
<dbReference type="InterPro" id="IPR036860">
    <property type="entry name" value="SH2_dom_sf"/>
</dbReference>
<dbReference type="InterPro" id="IPR008266">
    <property type="entry name" value="Tyr_kinase_AS"/>
</dbReference>
<dbReference type="InterPro" id="IPR020635">
    <property type="entry name" value="Tyr_kinase_cat_dom"/>
</dbReference>
<dbReference type="InterPro" id="IPR016251">
    <property type="entry name" value="Tyr_kinase_non-rcpt_Jak/Tyk2"/>
</dbReference>
<dbReference type="InterPro" id="IPR016045">
    <property type="entry name" value="Tyr_kinase_non-rcpt_TYK2_N"/>
</dbReference>
<dbReference type="PANTHER" id="PTHR45807:SF6">
    <property type="entry name" value="NON-RECEPTOR TYROSINE-PROTEIN KINASE TYK2"/>
    <property type="match status" value="1"/>
</dbReference>
<dbReference type="PANTHER" id="PTHR45807">
    <property type="entry name" value="TYROSINE-PROTEIN KINASE HOPSCOTCH"/>
    <property type="match status" value="1"/>
</dbReference>
<dbReference type="Pfam" id="PF18379">
    <property type="entry name" value="FERM_F1"/>
    <property type="match status" value="1"/>
</dbReference>
<dbReference type="Pfam" id="PF18377">
    <property type="entry name" value="FERM_F2"/>
    <property type="match status" value="1"/>
</dbReference>
<dbReference type="Pfam" id="PF17887">
    <property type="entry name" value="Jak1_Phl"/>
    <property type="match status" value="1"/>
</dbReference>
<dbReference type="Pfam" id="PF07714">
    <property type="entry name" value="PK_Tyr_Ser-Thr"/>
    <property type="match status" value="2"/>
</dbReference>
<dbReference type="Pfam" id="PF21990">
    <property type="entry name" value="SH2_1"/>
    <property type="match status" value="1"/>
</dbReference>
<dbReference type="PIRSF" id="PIRSF000636">
    <property type="entry name" value="TyrPK_Jak"/>
    <property type="match status" value="1"/>
</dbReference>
<dbReference type="PRINTS" id="PR01823">
    <property type="entry name" value="JANUSKINASE"/>
</dbReference>
<dbReference type="PRINTS" id="PR00109">
    <property type="entry name" value="TYRKINASE"/>
</dbReference>
<dbReference type="PRINTS" id="PR01827">
    <property type="entry name" value="YKINASETYK2"/>
</dbReference>
<dbReference type="SMART" id="SM00295">
    <property type="entry name" value="B41"/>
    <property type="match status" value="1"/>
</dbReference>
<dbReference type="SMART" id="SM00252">
    <property type="entry name" value="SH2"/>
    <property type="match status" value="1"/>
</dbReference>
<dbReference type="SMART" id="SM00219">
    <property type="entry name" value="TyrKc"/>
    <property type="match status" value="2"/>
</dbReference>
<dbReference type="SUPFAM" id="SSF50729">
    <property type="entry name" value="PH domain-like"/>
    <property type="match status" value="1"/>
</dbReference>
<dbReference type="SUPFAM" id="SSF56112">
    <property type="entry name" value="Protein kinase-like (PK-like)"/>
    <property type="match status" value="2"/>
</dbReference>
<dbReference type="SUPFAM" id="SSF47031">
    <property type="entry name" value="Second domain of FERM"/>
    <property type="match status" value="1"/>
</dbReference>
<dbReference type="SUPFAM" id="SSF55550">
    <property type="entry name" value="SH2 domain"/>
    <property type="match status" value="1"/>
</dbReference>
<dbReference type="PROSITE" id="PS50057">
    <property type="entry name" value="FERM_3"/>
    <property type="match status" value="1"/>
</dbReference>
<dbReference type="PROSITE" id="PS00107">
    <property type="entry name" value="PROTEIN_KINASE_ATP"/>
    <property type="match status" value="1"/>
</dbReference>
<dbReference type="PROSITE" id="PS50011">
    <property type="entry name" value="PROTEIN_KINASE_DOM"/>
    <property type="match status" value="2"/>
</dbReference>
<dbReference type="PROSITE" id="PS00109">
    <property type="entry name" value="PROTEIN_KINASE_TYR"/>
    <property type="match status" value="1"/>
</dbReference>
<evidence type="ECO:0000250" key="1">
    <source>
        <dbReference type="UniProtKB" id="Q9R117"/>
    </source>
</evidence>
<evidence type="ECO:0000255" key="2">
    <source>
        <dbReference type="PROSITE-ProRule" id="PRU00084"/>
    </source>
</evidence>
<evidence type="ECO:0000255" key="3">
    <source>
        <dbReference type="PROSITE-ProRule" id="PRU00159"/>
    </source>
</evidence>
<evidence type="ECO:0000255" key="4">
    <source>
        <dbReference type="PROSITE-ProRule" id="PRU10028"/>
    </source>
</evidence>
<evidence type="ECO:0000256" key="5">
    <source>
        <dbReference type="SAM" id="MobiDB-lite"/>
    </source>
</evidence>
<evidence type="ECO:0000269" key="6">
    <source>
    </source>
</evidence>
<evidence type="ECO:0000269" key="7">
    <source>
    </source>
</evidence>
<evidence type="ECO:0000269" key="8">
    <source>
    </source>
</evidence>
<evidence type="ECO:0000269" key="9">
    <source>
    </source>
</evidence>
<evidence type="ECO:0000269" key="10">
    <source>
    </source>
</evidence>
<evidence type="ECO:0000269" key="11">
    <source>
    </source>
</evidence>
<evidence type="ECO:0000269" key="12">
    <source>
    </source>
</evidence>
<evidence type="ECO:0000269" key="13">
    <source>
    </source>
</evidence>
<evidence type="ECO:0000269" key="14">
    <source>
    </source>
</evidence>
<evidence type="ECO:0000269" key="15">
    <source>
    </source>
</evidence>
<evidence type="ECO:0000269" key="16">
    <source>
    </source>
</evidence>
<evidence type="ECO:0000269" key="17">
    <source>
    </source>
</evidence>
<evidence type="ECO:0000269" key="18">
    <source>
    </source>
</evidence>
<evidence type="ECO:0000269" key="19">
    <source>
    </source>
</evidence>
<evidence type="ECO:0000269" key="20">
    <source>
    </source>
</evidence>
<evidence type="ECO:0000269" key="21">
    <source>
    </source>
</evidence>
<evidence type="ECO:0000269" key="22">
    <source>
    </source>
</evidence>
<evidence type="ECO:0000269" key="23">
    <source>
    </source>
</evidence>
<evidence type="ECO:0000269" key="24">
    <source>
    </source>
</evidence>
<evidence type="ECO:0000269" key="25">
    <source>
    </source>
</evidence>
<evidence type="ECO:0000269" key="26">
    <source>
    </source>
</evidence>
<evidence type="ECO:0000269" key="27">
    <source ref="2"/>
</evidence>
<evidence type="ECO:0000305" key="28"/>
<evidence type="ECO:0000305" key="29">
    <source>
    </source>
</evidence>
<evidence type="ECO:0007744" key="30">
    <source>
        <dbReference type="PDB" id="4OLI"/>
    </source>
</evidence>
<evidence type="ECO:0007744" key="31">
    <source>
        <dbReference type="PDB" id="4WOV"/>
    </source>
</evidence>
<evidence type="ECO:0007744" key="32">
    <source>
    </source>
</evidence>
<evidence type="ECO:0007744" key="33">
    <source>
    </source>
</evidence>
<evidence type="ECO:0007744" key="34">
    <source>
    </source>
</evidence>
<evidence type="ECO:0007829" key="35">
    <source>
        <dbReference type="PDB" id="3LXP"/>
    </source>
</evidence>
<evidence type="ECO:0007829" key="36">
    <source>
        <dbReference type="PDB" id="3NZ0"/>
    </source>
</evidence>
<evidence type="ECO:0007829" key="37">
    <source>
        <dbReference type="PDB" id="4PO6"/>
    </source>
</evidence>
<evidence type="ECO:0007829" key="38">
    <source>
        <dbReference type="PDB" id="7UYT"/>
    </source>
</evidence>
<evidence type="ECO:0007829" key="39">
    <source>
        <dbReference type="PDB" id="8S99"/>
    </source>
</evidence>
<sequence>MPLRHWGMARGSKPVGDGAQPMAAMGGLKVLLHWAGPGGGEPWVTFSESSLTAEEVCIHIAHKVGITPPCFNLFALFDAQAQVWLPPNHILEIPRDASLMLYFRIRFYFRNWHGMNPREPAVYRCGPPGTEASSDQTAQGMQLLDPASFEYLFEQGKHEFVNDVASLWELSTEEEIHHFKNESLGMAFLHLCHLALRHGIPLEEVAKKTSFKDCIPRSFRRHIRQHSALTRLRLRNVFRRFLRDFQPGRLSQQMVMVKYLATLERLAPRFGTERVPVCHLRLLAQAEGEPCYIRDSGVAPTDPGPESAAGPPTHEVLVTGTGGIQWWPVEEEVNKEEGSSGSSGRNPQASLFGKKAKAHKAVGQPADRPREPLWAYFCDFRDITHVVLKEHCVSIHRQDNKCLELSLPSRAAALSFVSLVDGYFRLTADSSHYLCHEVAPPRLVMSIRDGIHGPLLEPFVQAKLRPEDGLYLIHWSTSHPYRLILTVAQRSQAPDGMQSLRLRKFPIEQQDGAFVLEGWGRSFPSVRELGAALQGCLLRAGDDCFSLRRCCLPQPGETSNLIIMRGARASPRTLNLSQLSFHRVDQKEITQLSHLGQGTRTNVYEGRLRVEGSGDPEEGKMDDEDPLVPGRDRGQELRVVLKVLDPSHHDIALAFYETASLMSQVSHTHLAFVHGVCVRGPENIMVTEYVEHGPLDVWLRRERGHVPMAWKMVVAQQLASALSYLENKNLVHGNVCGRNILLARLGLAEGTSPFIKLSDPGVGLGALSREERVERIPWLAPECLPGGANSLSTAMDKWGFGATLLEICFDGEAPLQSRSPSEKEHFYQRQHRLPEPSCPQLATLTSQCLTYEPTQRPSFRTILRDLTRLQPHNLADVLTVNPDSPASDPTVFHKRYLKKIRDLGEGHFGKVSLYCYDPTNDGTGEMVAVKALKADCGPQHRSGWKQEIDILRTLYHEHIIKYKGCCEDQGEKSLQLVMEYVPLGSLRDYLPRHSIGLAQLLLFAQQICEGMAYLHAQHYIHRDLAARNVLLDNDRLVKIGDFGLAKAVPEGHEYYRVREDGDSPVFWYAPECLKEYKFYYASDVWSFGVTLYELLTHCDSSQSPPTKFLELIGIAQGQMTVLRLTELLERGERLPRPDKCPCEVYHLMKNCWETEASFRPTFENLIPILKTVHEKYQGQAPSVFSVC</sequence>